<organism>
    <name type="scientific">Bat coronavirus 133/2005</name>
    <name type="common">BtCoV</name>
    <name type="synonym">BtCoV/133/2005</name>
    <dbReference type="NCBI Taxonomy" id="389230"/>
    <lineage>
        <taxon>Viruses</taxon>
        <taxon>Riboviria</taxon>
        <taxon>Orthornavirae</taxon>
        <taxon>Pisuviricota</taxon>
        <taxon>Pisoniviricetes</taxon>
        <taxon>Nidovirales</taxon>
        <taxon>Cornidovirineae</taxon>
        <taxon>Coronaviridae</taxon>
        <taxon>Orthocoronavirinae</taxon>
        <taxon>Betacoronavirus</taxon>
        <taxon>Merbecovirus</taxon>
        <taxon>Bat coronavirus HKU4</taxon>
    </lineage>
</organism>
<reference key="1">
    <citation type="journal article" date="2006" name="J. Virol.">
        <title>Prevalence and genetic diversity of coronaviruses in bats from China.</title>
        <authorList>
            <person name="Tang X.C."/>
            <person name="Zhang J.X."/>
            <person name="Zhang S.Y."/>
            <person name="Wang P."/>
            <person name="Fan X.H."/>
            <person name="Li L.F."/>
            <person name="Li G."/>
            <person name="Dong B.Q."/>
            <person name="Liu W."/>
            <person name="Cheung C.L."/>
            <person name="Xu K.M."/>
            <person name="Song W.J."/>
            <person name="Vijaykrishna D."/>
            <person name="Poon L.L.M."/>
            <person name="Peiris J.S.M."/>
            <person name="Smith G.J."/>
            <person name="Chen H."/>
            <person name="Guan Y."/>
        </authorList>
    </citation>
    <scope>NUCLEOTIDE SEQUENCE [GENOMIC RNA]</scope>
</reference>
<reference key="2">
    <citation type="journal article" date="2009" name="J. Virol.">
        <title>Suppression of host gene expression by nsp1 proteins of group 2 bat coronaviruses.</title>
        <authorList>
            <person name="Tohya Y."/>
            <person name="Narayanan K."/>
            <person name="Kamitani W."/>
            <person name="Huang C."/>
            <person name="Lokugamage K."/>
            <person name="Makino S."/>
        </authorList>
    </citation>
    <scope>FUNCTION OF NSP1</scope>
</reference>
<name>R1AB_BC133</name>
<protein>
    <recommendedName>
        <fullName>Replicase polyprotein 1ab</fullName>
        <shortName>pp1ab</shortName>
    </recommendedName>
    <alternativeName>
        <fullName>ORF1ab polyprotein</fullName>
    </alternativeName>
    <component>
        <recommendedName>
            <fullName>Host translation inhibitor nsp1</fullName>
            <shortName>nsp1</shortName>
        </recommendedName>
        <alternativeName>
            <fullName>Leader protein</fullName>
        </alternativeName>
    </component>
    <component>
        <recommendedName>
            <fullName>Non-structural protein 2</fullName>
            <shortName>nsp2</shortName>
        </recommendedName>
        <alternativeName>
            <fullName>p65 homolog</fullName>
        </alternativeName>
    </component>
    <component>
        <recommendedName>
            <fullName>Papain-like proteinase nsp3</fullName>
            <shortName>PL-PRO</shortName>
            <ecNumber>3.4.19.12</ecNumber>
            <ecNumber>3.4.22.-</ecNumber>
        </recommendedName>
        <alternativeName>
            <fullName>Non-structural protein 3</fullName>
            <shortName>nsp3</shortName>
        </alternativeName>
    </component>
    <component>
        <recommendedName>
            <fullName>Non-structural protein 4</fullName>
            <shortName>nsp4</shortName>
        </recommendedName>
    </component>
    <component>
        <recommendedName>
            <fullName>3C-like proteinase nsp5</fullName>
            <shortName>3CL-PRO</shortName>
            <shortName>3CLp</shortName>
            <ecNumber>3.4.22.-</ecNumber>
        </recommendedName>
        <alternativeName>
            <fullName>nsp5</fullName>
        </alternativeName>
    </component>
    <component>
        <recommendedName>
            <fullName>Non-structural protein 6</fullName>
            <shortName>nsp6</shortName>
        </recommendedName>
    </component>
    <component>
        <recommendedName>
            <fullName>Non-structural protein 7</fullName>
            <shortName>nsp7</shortName>
        </recommendedName>
    </component>
    <component>
        <recommendedName>
            <fullName>Non-structural protein 8</fullName>
            <shortName>nsp8</shortName>
        </recommendedName>
    </component>
    <component>
        <recommendedName>
            <fullName>Viral protein genome-linked nsp9</fullName>
        </recommendedName>
        <alternativeName>
            <fullName>Non-structural protein 9</fullName>
            <shortName>nsp9</shortName>
        </alternativeName>
        <alternativeName>
            <fullName>RNA-capping enzyme subunit nsp9</fullName>
        </alternativeName>
        <alternativeName>
            <fullName>p12</fullName>
        </alternativeName>
    </component>
    <component>
        <recommendedName>
            <fullName>Non-structural protein 10</fullName>
            <shortName>nsp10</shortName>
        </recommendedName>
        <alternativeName>
            <fullName>Growth factor-like peptide</fullName>
            <shortName>GFL</shortName>
        </alternativeName>
    </component>
    <component>
        <recommendedName>
            <fullName>RNA-directed RNA polymerase nsp12</fullName>
            <shortName>Pol</shortName>
            <shortName>RdRp</shortName>
            <ecNumber>2.7.7.48</ecNumber>
            <ecNumber>2.7.7.50</ecNumber>
        </recommendedName>
        <alternativeName>
            <fullName>nsp12</fullName>
        </alternativeName>
    </component>
    <component>
        <recommendedName>
            <fullName>Helicase nsp13</fullName>
            <shortName>Hel</shortName>
            <ecNumber>3.6.4.12</ecNumber>
            <ecNumber>3.6.4.13</ecNumber>
        </recommendedName>
        <alternativeName>
            <fullName>nsp13</fullName>
        </alternativeName>
    </component>
    <component>
        <recommendedName>
            <fullName>Guanine-N7 methyltransferase nsp14</fullName>
            <shortName>ExoN</shortName>
            <ecNumber>2.1.1.56</ecNumber>
            <ecNumber>3.1.13.-</ecNumber>
        </recommendedName>
        <alternativeName>
            <fullName>nsp14</fullName>
        </alternativeName>
    </component>
    <component>
        <recommendedName>
            <fullName>Uridylate-specific endoribonuclease nsp15</fullName>
            <ecNumber>4.6.1.-</ecNumber>
        </recommendedName>
        <alternativeName>
            <fullName>NendoU</fullName>
        </alternativeName>
        <alternativeName>
            <fullName>nsp15</fullName>
        </alternativeName>
    </component>
    <component>
        <recommendedName>
            <fullName>2'-O-methyltransferase nsp16</fullName>
            <ecNumber>2.1.1.57</ecNumber>
        </recommendedName>
        <alternativeName>
            <fullName>nsp16</fullName>
        </alternativeName>
    </component>
</protein>
<organismHost>
    <name type="scientific">Tylonycteris pachypus</name>
    <name type="common">Lesser bamboo bat</name>
    <name type="synonym">Vespertilio pachypus</name>
    <dbReference type="NCBI Taxonomy" id="258959"/>
</organismHost>
<accession>P0C6W1</accession>
<accession>Q0Q4F3</accession>
<feature type="chain" id="PRO_0000290273" description="Host translation inhibitor nsp1" evidence="2">
    <location>
        <begin position="1"/>
        <end position="195"/>
    </location>
</feature>
<feature type="chain" id="PRO_0000290274" description="Non-structural protein 2" evidence="2">
    <location>
        <begin position="196"/>
        <end position="847"/>
    </location>
</feature>
<feature type="chain" id="PRO_0000290275" description="Papain-like proteinase nsp3" evidence="2">
    <location>
        <begin position="848"/>
        <end position="2791"/>
    </location>
</feature>
<feature type="chain" id="PRO_0000290276" description="Non-structural protein 4" evidence="2">
    <location>
        <begin position="2792"/>
        <end position="3298"/>
    </location>
</feature>
<feature type="chain" id="PRO_0000290277" description="3C-like proteinase nsp5" evidence="2">
    <location>
        <begin position="3299"/>
        <end position="3604"/>
    </location>
</feature>
<feature type="chain" id="PRO_0000290278" description="Non-structural protein 6" evidence="2">
    <location>
        <begin position="3605"/>
        <end position="3896"/>
    </location>
</feature>
<feature type="chain" id="PRO_0000290279" description="Non-structural protein 7" evidence="2">
    <location>
        <begin position="3897"/>
        <end position="3979"/>
    </location>
</feature>
<feature type="chain" id="PRO_0000290280" description="Non-structural protein 8" evidence="2">
    <location>
        <begin position="3980"/>
        <end position="4178"/>
    </location>
</feature>
<feature type="chain" id="PRO_0000290281" description="Viral protein genome-linked nsp9" evidence="2">
    <location>
        <begin position="4179"/>
        <end position="4288"/>
    </location>
</feature>
<feature type="chain" id="PRO_0000290282" description="Non-structural protein 10" evidence="2">
    <location>
        <begin position="4289"/>
        <end position="4427"/>
    </location>
</feature>
<feature type="chain" id="PRO_0000290283" description="RNA-directed RNA polymerase nsp12" evidence="2">
    <location>
        <begin position="4428"/>
        <end position="5361"/>
    </location>
</feature>
<feature type="chain" id="PRO_0000290284" description="Helicase nsp13" evidence="2">
    <location>
        <begin position="5362"/>
        <end position="5959"/>
    </location>
</feature>
<feature type="chain" id="PRO_0000290285" description="Guanine-N7 methyltransferase nsp14" evidence="2">
    <location>
        <begin position="5960"/>
        <end position="6482"/>
    </location>
</feature>
<feature type="chain" id="PRO_0000290286" description="Uridylate-specific endoribonuclease nsp15" evidence="2">
    <location>
        <begin position="6483"/>
        <end position="6824"/>
    </location>
</feature>
<feature type="chain" id="PRO_0000290287" description="2'-O-methyltransferase nsp16" evidence="2">
    <location>
        <begin position="6825"/>
        <end position="7126"/>
    </location>
</feature>
<feature type="transmembrane region" description="Helical" evidence="4">
    <location>
        <begin position="2119"/>
        <end position="2139"/>
    </location>
</feature>
<feature type="transmembrane region" description="Helical" evidence="4">
    <location>
        <begin position="2152"/>
        <end position="2172"/>
    </location>
</feature>
<feature type="transmembrane region" description="Helical" evidence="4">
    <location>
        <begin position="2229"/>
        <end position="2249"/>
    </location>
</feature>
<feature type="transmembrane region" description="Helical" evidence="4">
    <location>
        <begin position="2333"/>
        <end position="2353"/>
    </location>
</feature>
<feature type="transmembrane region" description="Helical" evidence="4">
    <location>
        <begin position="2357"/>
        <end position="2377"/>
    </location>
</feature>
<feature type="transmembrane region" description="Helical" evidence="4">
    <location>
        <begin position="2382"/>
        <end position="2402"/>
    </location>
</feature>
<feature type="transmembrane region" description="Helical" evidence="4">
    <location>
        <begin position="2807"/>
        <end position="2827"/>
    </location>
</feature>
<feature type="transmembrane region" description="Helical" evidence="4">
    <location>
        <begin position="3079"/>
        <end position="3099"/>
    </location>
</feature>
<feature type="transmembrane region" description="Helical" evidence="4">
    <location>
        <begin position="3112"/>
        <end position="3132"/>
    </location>
</feature>
<feature type="transmembrane region" description="Helical" evidence="4">
    <location>
        <begin position="3156"/>
        <end position="3176"/>
    </location>
</feature>
<feature type="transmembrane region" description="Helical" evidence="4">
    <location>
        <begin position="3610"/>
        <end position="3630"/>
    </location>
</feature>
<feature type="transmembrane region" description="Helical" evidence="4">
    <location>
        <begin position="3644"/>
        <end position="3664"/>
    </location>
</feature>
<feature type="transmembrane region" description="Helical" evidence="4">
    <location>
        <begin position="3669"/>
        <end position="3689"/>
    </location>
</feature>
<feature type="transmembrane region" description="Helical" evidence="4">
    <location>
        <begin position="3714"/>
        <end position="3734"/>
    </location>
</feature>
<feature type="transmembrane region" description="Helical" evidence="4">
    <location>
        <begin position="3742"/>
        <end position="3762"/>
    </location>
</feature>
<feature type="transmembrane region" description="Helical" evidence="4">
    <location>
        <begin position="3791"/>
        <end position="3811"/>
    </location>
</feature>
<feature type="transmembrane region" description="Helical" evidence="4">
    <location>
        <begin position="3815"/>
        <end position="3835"/>
    </location>
</feature>
<feature type="domain" description="CoV Nsp1 globular" evidence="26">
    <location>
        <begin position="25"/>
        <end position="151"/>
    </location>
</feature>
<feature type="domain" description="BetaCoV Nsp1 C-terminal" evidence="27">
    <location>
        <begin position="167"/>
        <end position="195"/>
    </location>
</feature>
<feature type="domain" description="CoV Nsp2 N-terminal" evidence="28">
    <location>
        <begin position="197"/>
        <end position="472"/>
    </location>
</feature>
<feature type="domain" description="CoV Nsp2 middle" evidence="29">
    <location>
        <begin position="478"/>
        <end position="712"/>
    </location>
</feature>
<feature type="domain" description="CoV Nsp2 C-terminal" evidence="30">
    <location>
        <begin position="714"/>
        <end position="847"/>
    </location>
</feature>
<feature type="domain" description="Ubiquitin-like 1" evidence="5">
    <location>
        <begin position="851"/>
        <end position="960"/>
    </location>
</feature>
<feature type="domain" description="Macro 1" evidence="7">
    <location>
        <begin position="1159"/>
        <end position="1328"/>
    </location>
</feature>
<feature type="domain" description="Macro 2" evidence="7">
    <location>
        <begin position="1329"/>
        <end position="1453"/>
    </location>
</feature>
<feature type="domain" description="DPUP" evidence="11">
    <location>
        <begin position="1453"/>
        <end position="1526"/>
    </location>
</feature>
<feature type="domain" description="Ubiquitin-like 2" evidence="5">
    <location>
        <begin position="1531"/>
        <end position="1586"/>
    </location>
</feature>
<feature type="domain" description="Peptidase C16" evidence="6">
    <location>
        <begin position="1600"/>
        <end position="1871"/>
    </location>
</feature>
<feature type="domain" description="Nucleic acid-binding" evidence="12">
    <location>
        <begin position="1885"/>
        <end position="2002"/>
    </location>
</feature>
<feature type="domain" description="G2M" evidence="33">
    <location>
        <begin position="2019"/>
        <end position="2140"/>
    </location>
</feature>
<feature type="domain" description="3Ecto" evidence="32">
    <location>
        <begin position="2266"/>
        <end position="2332"/>
    </location>
</feature>
<feature type="domain" description="CoV Nsp3 Y" evidence="31">
    <location>
        <begin position="2416"/>
        <end position="2789"/>
    </location>
</feature>
<feature type="domain" description="Nsp4C" evidence="13">
    <location>
        <begin position="3202"/>
        <end position="3298"/>
    </location>
</feature>
<feature type="domain" description="Peptidase C30" evidence="9">
    <location>
        <begin position="3299"/>
        <end position="3604"/>
    </location>
</feature>
<feature type="domain" description="RdRp Nsp7 cofactor" evidence="16">
    <location>
        <begin position="3897"/>
        <end position="3979"/>
    </location>
</feature>
<feature type="domain" description="RdRp Nsp8 cofactor" evidence="17">
    <location>
        <begin position="3980"/>
        <end position="4178"/>
    </location>
</feature>
<feature type="domain" description="Nsp9 ssRNA-binding" evidence="18">
    <location>
        <begin position="4179"/>
        <end position="4288"/>
    </location>
</feature>
<feature type="domain" description="ExoN/MTase coactivator" evidence="19">
    <location>
        <begin position="4289"/>
        <end position="4427"/>
    </location>
</feature>
<feature type="domain" description="NiRAN" evidence="14">
    <location>
        <begin position="4433"/>
        <end position="4690"/>
    </location>
</feature>
<feature type="domain" description="Nsp12 Interface" evidence="34">
    <location>
        <begin position="4695"/>
        <end position="4793"/>
    </location>
</feature>
<feature type="domain" description="Nsp12 RNA-dependent RNA polymerase" evidence="15">
    <location>
        <begin position="4794"/>
        <end position="5361"/>
    </location>
</feature>
<feature type="domain" description="RdRp catalytic" evidence="8">
    <location>
        <begin position="5041"/>
        <end position="5203"/>
    </location>
</feature>
<feature type="domain" description="CV ZBD" evidence="10">
    <location>
        <begin position="5362"/>
        <end position="5474"/>
    </location>
</feature>
<feature type="domain" description="(+)RNA virus helicase ATP-binding">
    <location>
        <begin position="5618"/>
        <end position="5799"/>
    </location>
</feature>
<feature type="domain" description="(+)RNA virus helicase C-terminal">
    <location>
        <begin position="5800"/>
        <end position="5974"/>
    </location>
</feature>
<feature type="domain" description="ExoN" evidence="20">
    <location>
        <begin position="6031"/>
        <end position="6246"/>
    </location>
</feature>
<feature type="domain" description="N7-MTase" evidence="21">
    <location>
        <begin position="6255"/>
        <end position="6482"/>
    </location>
</feature>
<feature type="domain" description="Nsp15 N-terminal oligomerization" evidence="24">
    <location>
        <begin position="6483"/>
        <end position="6543"/>
    </location>
</feature>
<feature type="domain" description="AV-Nsp11N/CoV-Nsp15M" evidence="25">
    <location>
        <begin position="6544"/>
        <end position="6665"/>
    </location>
</feature>
<feature type="domain" description="NendoU" evidence="23">
    <location>
        <begin position="6682"/>
        <end position="6821"/>
    </location>
</feature>
<feature type="domain" description="Nidovirus-type SAM-dependent 2'-O-MTase" evidence="22">
    <location>
        <begin position="6826"/>
        <end position="7120"/>
    </location>
</feature>
<feature type="zinc finger region" description="C4-type" evidence="6">
    <location>
        <begin position="1721"/>
        <end position="1758"/>
    </location>
</feature>
<feature type="zinc finger region" evidence="1">
    <location>
        <begin position="4362"/>
        <end position="4378"/>
    </location>
</feature>
<feature type="zinc finger region" evidence="1">
    <location>
        <begin position="4404"/>
        <end position="4417"/>
    </location>
</feature>
<feature type="region of interest" description="C4" evidence="28">
    <location>
        <begin position="339"/>
        <end position="360"/>
    </location>
</feature>
<feature type="region of interest" description="Disordered" evidence="35">
    <location>
        <begin position="1039"/>
        <end position="1061"/>
    </location>
</feature>
<feature type="region of interest" description="HD1" evidence="1">
    <location>
        <begin position="2119"/>
        <end position="2402"/>
    </location>
</feature>
<feature type="region of interest" description="Y1" evidence="31">
    <location>
        <begin position="2416"/>
        <end position="2506"/>
    </location>
</feature>
<feature type="region of interest" description="ZF1" evidence="31">
    <location>
        <begin position="2420"/>
        <end position="2433"/>
    </location>
</feature>
<feature type="region of interest" description="ZF2" evidence="31">
    <location>
        <begin position="2466"/>
        <end position="2476"/>
    </location>
</feature>
<feature type="region of interest" description="CoV-Y" evidence="31">
    <location>
        <begin position="2507"/>
        <end position="2789"/>
    </location>
</feature>
<feature type="region of interest" description="Y2" evidence="31">
    <location>
        <begin position="2507"/>
        <end position="2605"/>
    </location>
</feature>
<feature type="region of interest" description="Y3" evidence="31">
    <location>
        <begin position="2606"/>
        <end position="2688"/>
    </location>
</feature>
<feature type="region of interest" description="Y4" evidence="31">
    <location>
        <begin position="2689"/>
        <end position="2789"/>
    </location>
</feature>
<feature type="region of interest" description="HD2" evidence="1">
    <location>
        <begin position="2807"/>
        <end position="3176"/>
    </location>
</feature>
<feature type="region of interest" description="HD3" evidence="1">
    <location>
        <begin position="3610"/>
        <end position="3835"/>
    </location>
</feature>
<feature type="region of interest" description="RdRp Fingers N-ter" evidence="15">
    <location>
        <begin position="4796"/>
        <end position="5010"/>
    </location>
</feature>
<feature type="region of interest" description="RdRp Palm N-ter" evidence="15">
    <location>
        <begin position="5011"/>
        <end position="5049"/>
    </location>
</feature>
<feature type="region of interest" description="RdRp Fingers C-ter" evidence="15">
    <location>
        <begin position="5050"/>
        <end position="5108"/>
    </location>
</feature>
<feature type="region of interest" description="RdRp Palm C-ter" evidence="15">
    <location>
        <begin position="5109"/>
        <end position="5244"/>
    </location>
</feature>
<feature type="region of interest" description="RdRp Thumb" evidence="15">
    <location>
        <begin position="5245"/>
        <end position="5361"/>
    </location>
</feature>
<feature type="region of interest" description="GpppA-binding" evidence="21">
    <location>
        <begin position="6368"/>
        <end position="6382"/>
    </location>
</feature>
<feature type="compositionally biased region" description="Low complexity" evidence="35">
    <location>
        <begin position="1041"/>
        <end position="1059"/>
    </location>
</feature>
<feature type="active site" description="For PL-PRO activity" evidence="6">
    <location>
        <position position="1641"/>
    </location>
</feature>
<feature type="active site" description="For PL-PRO activity" evidence="6">
    <location>
        <position position="1807"/>
    </location>
</feature>
<feature type="active site" description="For PL-PRO activity" evidence="6">
    <location>
        <position position="1822"/>
    </location>
</feature>
<feature type="active site" description="For 3CL-PRO activity" evidence="9">
    <location>
        <position position="3339"/>
    </location>
</feature>
<feature type="active site" description="For 3CL-PRO activity" evidence="9">
    <location>
        <position position="3446"/>
    </location>
</feature>
<feature type="active site" evidence="15">
    <location>
        <position position="5188"/>
    </location>
</feature>
<feature type="active site" evidence="15">
    <location>
        <position position="5189"/>
    </location>
</feature>
<feature type="active site" evidence="15">
    <location>
        <position position="5190"/>
    </location>
</feature>
<feature type="active site" evidence="20">
    <location>
        <position position="6049"/>
    </location>
</feature>
<feature type="active site" evidence="20">
    <location>
        <position position="6051"/>
    </location>
</feature>
<feature type="active site" evidence="20">
    <location>
        <position position="6150"/>
    </location>
</feature>
<feature type="active site" evidence="20">
    <location>
        <position position="6227"/>
    </location>
</feature>
<feature type="active site" evidence="20">
    <location>
        <position position="6232"/>
    </location>
</feature>
<feature type="active site" evidence="23">
    <location>
        <position position="6712"/>
    </location>
</feature>
<feature type="active site" evidence="23">
    <location>
        <position position="6727"/>
    </location>
</feature>
<feature type="active site" evidence="23">
    <location>
        <position position="6767"/>
    </location>
</feature>
<feature type="active site" evidence="22">
    <location>
        <position position="6870"/>
    </location>
</feature>
<feature type="active site" evidence="22">
    <location>
        <position position="6954"/>
    </location>
</feature>
<feature type="active site" evidence="22">
    <location>
        <position position="6994"/>
    </location>
</feature>
<feature type="active site" evidence="22">
    <location>
        <position position="7027"/>
    </location>
</feature>
<feature type="binding site" evidence="28">
    <location>
        <position position="339"/>
    </location>
    <ligand>
        <name>Zn(2+)</name>
        <dbReference type="ChEBI" id="CHEBI:29105"/>
        <label>1</label>
    </ligand>
</feature>
<feature type="binding site" evidence="28">
    <location>
        <position position="342"/>
    </location>
    <ligand>
        <name>Zn(2+)</name>
        <dbReference type="ChEBI" id="CHEBI:29105"/>
        <label>1</label>
    </ligand>
</feature>
<feature type="binding site" evidence="28">
    <location>
        <position position="358"/>
    </location>
    <ligand>
        <name>Zn(2+)</name>
        <dbReference type="ChEBI" id="CHEBI:29105"/>
        <label>1</label>
    </ligand>
</feature>
<feature type="binding site" evidence="28">
    <location>
        <position position="360"/>
    </location>
    <ligand>
        <name>Zn(2+)</name>
        <dbReference type="ChEBI" id="CHEBI:29105"/>
        <label>1</label>
    </ligand>
</feature>
<feature type="binding site" evidence="6">
    <location>
        <position position="1721"/>
    </location>
    <ligand>
        <name>Zn(2+)</name>
        <dbReference type="ChEBI" id="CHEBI:29105"/>
        <label>2</label>
    </ligand>
</feature>
<feature type="binding site" evidence="6">
    <location>
        <position position="1724"/>
    </location>
    <ligand>
        <name>Zn(2+)</name>
        <dbReference type="ChEBI" id="CHEBI:29105"/>
        <label>2</label>
    </ligand>
</feature>
<feature type="binding site" evidence="6">
    <location>
        <position position="1756"/>
    </location>
    <ligand>
        <name>Zn(2+)</name>
        <dbReference type="ChEBI" id="CHEBI:29105"/>
        <label>2</label>
    </ligand>
</feature>
<feature type="binding site" evidence="6">
    <location>
        <position position="1758"/>
    </location>
    <ligand>
        <name>Zn(2+)</name>
        <dbReference type="ChEBI" id="CHEBI:29105"/>
        <label>2</label>
    </ligand>
</feature>
<feature type="binding site" evidence="31">
    <location>
        <position position="2420"/>
    </location>
    <ligand>
        <name>Zn(2+)</name>
        <dbReference type="ChEBI" id="CHEBI:29105"/>
        <label>3</label>
    </ligand>
</feature>
<feature type="binding site" evidence="31">
    <location>
        <position position="2425"/>
    </location>
    <ligand>
        <name>Zn(2+)</name>
        <dbReference type="ChEBI" id="CHEBI:29105"/>
        <label>3</label>
    </ligand>
</feature>
<feature type="binding site" evidence="31">
    <location>
        <position position="2430"/>
    </location>
    <ligand>
        <name>Zn(2+)</name>
        <dbReference type="ChEBI" id="CHEBI:29105"/>
        <label>3</label>
    </ligand>
</feature>
<feature type="binding site" evidence="31">
    <location>
        <position position="2433"/>
    </location>
    <ligand>
        <name>Zn(2+)</name>
        <dbReference type="ChEBI" id="CHEBI:29105"/>
        <label>3</label>
    </ligand>
</feature>
<feature type="binding site" evidence="31">
    <location>
        <position position="2466"/>
    </location>
    <ligand>
        <name>Zn(2+)</name>
        <dbReference type="ChEBI" id="CHEBI:29105"/>
        <label>4</label>
    </ligand>
</feature>
<feature type="binding site" evidence="31">
    <location>
        <position position="2469"/>
    </location>
    <ligand>
        <name>Zn(2+)</name>
        <dbReference type="ChEBI" id="CHEBI:29105"/>
        <label>4</label>
    </ligand>
</feature>
<feature type="binding site" evidence="31">
    <location>
        <position position="2473"/>
    </location>
    <ligand>
        <name>Zn(2+)</name>
        <dbReference type="ChEBI" id="CHEBI:29105"/>
        <label>4</label>
    </ligand>
</feature>
<feature type="binding site" evidence="31">
    <location>
        <position position="2476"/>
    </location>
    <ligand>
        <name>Zn(2+)</name>
        <dbReference type="ChEBI" id="CHEBI:29105"/>
        <label>4</label>
    </ligand>
</feature>
<feature type="binding site" evidence="19">
    <location>
        <position position="4362"/>
    </location>
    <ligand>
        <name>Zn(2+)</name>
        <dbReference type="ChEBI" id="CHEBI:29105"/>
        <label>5</label>
    </ligand>
</feature>
<feature type="binding site" evidence="19">
    <location>
        <position position="4365"/>
    </location>
    <ligand>
        <name>Zn(2+)</name>
        <dbReference type="ChEBI" id="CHEBI:29105"/>
        <label>5</label>
    </ligand>
</feature>
<feature type="binding site" evidence="19">
    <location>
        <position position="4371"/>
    </location>
    <ligand>
        <name>Zn(2+)</name>
        <dbReference type="ChEBI" id="CHEBI:29105"/>
        <label>5</label>
    </ligand>
</feature>
<feature type="binding site" evidence="19">
    <location>
        <position position="4378"/>
    </location>
    <ligand>
        <name>Zn(2+)</name>
        <dbReference type="ChEBI" id="CHEBI:29105"/>
        <label>5</label>
    </ligand>
</feature>
<feature type="binding site" evidence="19">
    <location>
        <position position="4404"/>
    </location>
    <ligand>
        <name>Zn(2+)</name>
        <dbReference type="ChEBI" id="CHEBI:29105"/>
        <label>6</label>
    </ligand>
</feature>
<feature type="binding site" evidence="19">
    <location>
        <position position="4407"/>
    </location>
    <ligand>
        <name>Zn(2+)</name>
        <dbReference type="ChEBI" id="CHEBI:29105"/>
        <label>6</label>
    </ligand>
</feature>
<feature type="binding site" evidence="19">
    <location>
        <position position="4415"/>
    </location>
    <ligand>
        <name>Zn(2+)</name>
        <dbReference type="ChEBI" id="CHEBI:29105"/>
        <label>6</label>
    </ligand>
</feature>
<feature type="binding site" evidence="19">
    <location>
        <position position="4417"/>
    </location>
    <ligand>
        <name>Zn(2+)</name>
        <dbReference type="ChEBI" id="CHEBI:29105"/>
        <label>6</label>
    </ligand>
</feature>
<feature type="binding site" evidence="3">
    <location>
        <position position="4638"/>
    </location>
    <ligand>
        <name>Mn(2+)</name>
        <dbReference type="ChEBI" id="CHEBI:29035"/>
    </ligand>
</feature>
<feature type="binding site" evidence="3">
    <location>
        <position position="4647"/>
    </location>
    <ligand>
        <name>Mn(2+)</name>
        <dbReference type="ChEBI" id="CHEBI:29035"/>
    </ligand>
</feature>
<feature type="binding site" evidence="34">
    <location>
        <position position="4724"/>
    </location>
    <ligand>
        <name>Zn(2+)</name>
        <dbReference type="ChEBI" id="CHEBI:29105"/>
        <label>7</label>
    </ligand>
</feature>
<feature type="binding site" evidence="34">
    <location>
        <position position="4730"/>
    </location>
    <ligand>
        <name>Zn(2+)</name>
        <dbReference type="ChEBI" id="CHEBI:29105"/>
        <label>7</label>
    </ligand>
</feature>
<feature type="binding site" evidence="34">
    <location>
        <position position="4735"/>
    </location>
    <ligand>
        <name>Zn(2+)</name>
        <dbReference type="ChEBI" id="CHEBI:29105"/>
        <label>7</label>
    </ligand>
</feature>
<feature type="binding site" evidence="34">
    <location>
        <position position="4739"/>
    </location>
    <ligand>
        <name>Zn(2+)</name>
        <dbReference type="ChEBI" id="CHEBI:29105"/>
        <label>7</label>
    </ligand>
</feature>
<feature type="binding site" evidence="15">
    <location>
        <position position="4916"/>
    </location>
    <ligand>
        <name>Zn(2+)</name>
        <dbReference type="ChEBI" id="CHEBI:29105"/>
        <label>8</label>
    </ligand>
</feature>
<feature type="binding site" evidence="15">
    <location>
        <position position="5071"/>
    </location>
    <ligand>
        <name>Zn(2+)</name>
        <dbReference type="ChEBI" id="CHEBI:29105"/>
        <label>8</label>
    </ligand>
</feature>
<feature type="binding site" evidence="15">
    <location>
        <position position="5074"/>
    </location>
    <ligand>
        <name>Zn(2+)</name>
        <dbReference type="ChEBI" id="CHEBI:29105"/>
        <label>8</label>
    </ligand>
</feature>
<feature type="binding site" evidence="15">
    <location>
        <position position="5075"/>
    </location>
    <ligand>
        <name>Zn(2+)</name>
        <dbReference type="ChEBI" id="CHEBI:29105"/>
        <label>8</label>
    </ligand>
</feature>
<feature type="binding site" evidence="10">
    <location>
        <position position="5366"/>
    </location>
    <ligand>
        <name>Zn(2+)</name>
        <dbReference type="ChEBI" id="CHEBI:29105"/>
        <label>9</label>
    </ligand>
</feature>
<feature type="binding site" evidence="10">
    <location>
        <position position="5369"/>
    </location>
    <ligand>
        <name>Zn(2+)</name>
        <dbReference type="ChEBI" id="CHEBI:29105"/>
        <label>9</label>
    </ligand>
</feature>
<feature type="binding site" evidence="10">
    <location>
        <position position="5377"/>
    </location>
    <ligand>
        <name>Zn(2+)</name>
        <dbReference type="ChEBI" id="CHEBI:29105"/>
        <label>10</label>
    </ligand>
</feature>
<feature type="binding site" evidence="10">
    <location>
        <position position="5380"/>
    </location>
    <ligand>
        <name>Zn(2+)</name>
        <dbReference type="ChEBI" id="CHEBI:29105"/>
        <label>10</label>
    </ligand>
</feature>
<feature type="binding site" evidence="10">
    <location>
        <position position="5387"/>
    </location>
    <ligand>
        <name>Zn(2+)</name>
        <dbReference type="ChEBI" id="CHEBI:29105"/>
        <label>9</label>
    </ligand>
</feature>
<feature type="binding site" evidence="10">
    <location>
        <position position="5390"/>
    </location>
    <ligand>
        <name>Zn(2+)</name>
        <dbReference type="ChEBI" id="CHEBI:29105"/>
        <label>9</label>
    </ligand>
</feature>
<feature type="binding site" evidence="10">
    <location>
        <position position="5394"/>
    </location>
    <ligand>
        <name>Zn(2+)</name>
        <dbReference type="ChEBI" id="CHEBI:29105"/>
        <label>10</label>
    </ligand>
</feature>
<feature type="binding site" evidence="10">
    <location>
        <position position="5400"/>
    </location>
    <ligand>
        <name>Zn(2+)</name>
        <dbReference type="ChEBI" id="CHEBI:29105"/>
        <label>10</label>
    </ligand>
</feature>
<feature type="binding site" evidence="10">
    <location>
        <position position="5411"/>
    </location>
    <ligand>
        <name>Zn(2+)</name>
        <dbReference type="ChEBI" id="CHEBI:29105"/>
        <label>11</label>
    </ligand>
</feature>
<feature type="binding site" evidence="10">
    <location>
        <position position="5416"/>
    </location>
    <ligand>
        <name>Zn(2+)</name>
        <dbReference type="ChEBI" id="CHEBI:29105"/>
        <label>11</label>
    </ligand>
</feature>
<feature type="binding site" evidence="10">
    <location>
        <position position="5433"/>
    </location>
    <ligand>
        <name>Zn(2+)</name>
        <dbReference type="ChEBI" id="CHEBI:29105"/>
        <label>11</label>
    </ligand>
</feature>
<feature type="binding site" evidence="10">
    <location>
        <position position="5436"/>
    </location>
    <ligand>
        <name>Zn(2+)</name>
        <dbReference type="ChEBI" id="CHEBI:29105"/>
        <label>3</label>
    </ligand>
</feature>
<feature type="binding site" evidence="4">
    <location>
        <begin position="5643"/>
        <end position="5650"/>
    </location>
    <ligand>
        <name>ATP</name>
        <dbReference type="ChEBI" id="CHEBI:30616"/>
    </ligand>
</feature>
<feature type="binding site" evidence="20">
    <location>
        <position position="6166"/>
    </location>
    <ligand>
        <name>Zn(2+)</name>
        <dbReference type="ChEBI" id="CHEBI:29105"/>
        <label>12</label>
    </ligand>
</feature>
<feature type="binding site" evidence="20">
    <location>
        <position position="6169"/>
    </location>
    <ligand>
        <name>Zn(2+)</name>
        <dbReference type="ChEBI" id="CHEBI:29105"/>
        <label>12</label>
    </ligand>
</feature>
<feature type="binding site" evidence="20">
    <location>
        <position position="6185"/>
    </location>
    <ligand>
        <name>Zn(2+)</name>
        <dbReference type="ChEBI" id="CHEBI:29105"/>
        <label>12</label>
    </ligand>
</feature>
<feature type="binding site" evidence="20">
    <location>
        <position position="6188"/>
    </location>
    <ligand>
        <name>Zn(2+)</name>
        <dbReference type="ChEBI" id="CHEBI:29105"/>
        <label>12</label>
    </ligand>
</feature>
<feature type="binding site" evidence="20">
    <location>
        <position position="6216"/>
    </location>
    <ligand>
        <name>Zn(2+)</name>
        <dbReference type="ChEBI" id="CHEBI:29105"/>
        <label>13</label>
    </ligand>
</feature>
<feature type="binding site" evidence="20">
    <location>
        <position position="6220"/>
    </location>
    <ligand>
        <name>Zn(2+)</name>
        <dbReference type="ChEBI" id="CHEBI:29105"/>
        <label>13</label>
    </ligand>
</feature>
<feature type="binding site" evidence="20">
    <location>
        <position position="6223"/>
    </location>
    <ligand>
        <name>Zn(2+)</name>
        <dbReference type="ChEBI" id="CHEBI:29105"/>
        <label>13</label>
    </ligand>
</feature>
<feature type="binding site" evidence="20">
    <location>
        <position position="6238"/>
    </location>
    <ligand>
        <name>Zn(2+)</name>
        <dbReference type="ChEBI" id="CHEBI:29105"/>
        <label>13</label>
    </ligand>
</feature>
<feature type="binding site" evidence="21">
    <location>
        <begin position="6290"/>
        <end position="6296"/>
    </location>
    <ligand>
        <name>S-adenosyl-L-methionine</name>
        <dbReference type="ChEBI" id="CHEBI:59789"/>
    </ligand>
</feature>
<feature type="binding site" evidence="21">
    <location>
        <position position="6406"/>
    </location>
    <ligand>
        <name>Zn(2+)</name>
        <dbReference type="ChEBI" id="CHEBI:29105"/>
        <label>14</label>
    </ligand>
</feature>
<feature type="binding site" evidence="21">
    <location>
        <position position="6428"/>
    </location>
    <ligand>
        <name>Zn(2+)</name>
        <dbReference type="ChEBI" id="CHEBI:29105"/>
        <label>14</label>
    </ligand>
</feature>
<feature type="binding site" evidence="21">
    <location>
        <position position="6439"/>
    </location>
    <ligand>
        <name>Zn(2+)</name>
        <dbReference type="ChEBI" id="CHEBI:29105"/>
        <label>14</label>
    </ligand>
</feature>
<feature type="binding site" evidence="21">
    <location>
        <position position="6442"/>
    </location>
    <ligand>
        <name>Zn(2+)</name>
        <dbReference type="ChEBI" id="CHEBI:29105"/>
        <label>14</label>
    </ligand>
</feature>
<feature type="site" description="Cleavage" evidence="4">
    <location>
        <begin position="195"/>
        <end position="196"/>
    </location>
</feature>
<feature type="site" description="Cleavage; by PL-PRO" evidence="4">
    <location>
        <begin position="847"/>
        <end position="848"/>
    </location>
</feature>
<feature type="site" description="Cleavage; by PL-PRO" evidence="4">
    <location>
        <begin position="2791"/>
        <end position="2792"/>
    </location>
</feature>
<feature type="site" description="Cleavage; by 3CL-PRO" evidence="4">
    <location>
        <begin position="3298"/>
        <end position="3299"/>
    </location>
</feature>
<feature type="site" description="Cleavage; by 3CL-PRO" evidence="4">
    <location>
        <begin position="3604"/>
        <end position="3605"/>
    </location>
</feature>
<feature type="site" description="Cleavage; by 3CL-PRO" evidence="4">
    <location>
        <begin position="3896"/>
        <end position="3897"/>
    </location>
</feature>
<feature type="site" description="Cleavage; by 3CL-PRO" evidence="4">
    <location>
        <begin position="3979"/>
        <end position="3980"/>
    </location>
</feature>
<feature type="site" description="Cleavage; by 3CL-PRO" evidence="4">
    <location>
        <begin position="4178"/>
        <end position="4179"/>
    </location>
</feature>
<feature type="site" description="Cleavage; by 3CL-PRO" evidence="4">
    <location>
        <begin position="4288"/>
        <end position="4289"/>
    </location>
</feature>
<feature type="site" description="Cleavage; by 3CL-PRO" evidence="4">
    <location>
        <begin position="4427"/>
        <end position="4428"/>
    </location>
</feature>
<feature type="site" description="Cleavage; by 3CL-PRO" evidence="4">
    <location>
        <begin position="5361"/>
        <end position="5362"/>
    </location>
</feature>
<feature type="site" description="Cleavage; by 3CL-PRO" evidence="4">
    <location>
        <begin position="5959"/>
        <end position="5960"/>
    </location>
</feature>
<feature type="site" description="Cleavage; by 3CL-PRO" evidence="4">
    <location>
        <begin position="6482"/>
        <end position="6483"/>
    </location>
</feature>
<feature type="site" description="Cleavage; by 3CL-PRO" evidence="4">
    <location>
        <begin position="6824"/>
        <end position="6825"/>
    </location>
</feature>
<feature type="disulfide bond" evidence="32">
    <location>
        <begin position="2282"/>
        <end position="2310"/>
    </location>
</feature>
<feature type="disulfide bond" evidence="32">
    <location>
        <begin position="2300"/>
        <end position="2307"/>
    </location>
</feature>
<comment type="function">
    <text evidence="2">The replicase polyprotein of coronaviruses is a multifunctional protein: it contains the activities necessary for the transcription of negative stranded RNA, leader RNA, subgenomic mRNAs and progeny virion RNA as well as proteinases responsible for the cleavage of the polyprotein into functional products.</text>
</comment>
<comment type="function">
    <molecule>Host translation inhibitor nsp1</molecule>
    <text evidence="2 36">Inhibits host translation by interacting with the 40S ribosomal subunit. The nsp1-40S ribosome complex further induces an endonucleolytic cleavage near the 5'UTR of host mRNAs, targeting them for degradation. Viral mRNAs are not susceptible to nsp1-mediated endonucleolytic RNA cleavage thanks to the presence of a 5'-end leader sequence and are therefore protected from degradation. By suppressing host gene expression, nsp1 facilitates efficient viral gene expression in infected cells and evasion from host immune response.</text>
</comment>
<comment type="function">
    <molecule>Non-structural protein 2</molecule>
    <text evidence="2">May play a role in the modulation of host cell survival signaling pathway by interacting with host PHB and PHB2. Indeed, these two proteins play a role in maintaining the functional integrity of the mitochondria and protecting cells from various stresses.</text>
</comment>
<comment type="function">
    <molecule>Papain-like proteinase nsp3</molecule>
    <text evidence="2">Responsible for the cleavages located at the N-terminus of the replicase polyprotein. In addition, PL-PRO possesses a deubiquitinating/deISGylating activity and processes both 'Lys-48'- and 'Lys-63'-linked polyubiquitin chains from cellular substrates. Participates together with nsp4 in the assembly of virally-induced cytoplasmic double-membrane vesicles necessary for viral replication. Antagonizes innate immune induction of type I interferon by blocking the phosphorylation, dimerization and subsequent nuclear translocation of host IRF3. Also prevents host NF-kappa-B signaling.</text>
</comment>
<comment type="function">
    <molecule>Non-structural protein 4</molecule>
    <text evidence="2">Participates in the assembly of virally-induced cytoplasmic double-membrane vesicles necessary for viral replication.</text>
</comment>
<comment type="function">
    <molecule>3C-like proteinase nsp5</molecule>
    <text evidence="2 9">Cleaves the C-terminus of replicase polyprotein at 11 sites. Recognizes substrates containing the core sequence [ILMVF]-Q-|-[SGACN]. Also able to bind an ADP-ribose-1''-phosphate (ADRP).</text>
</comment>
<comment type="function">
    <molecule>Non-structural protein 6</molecule>
    <text evidence="2">Plays a role in the initial induction of autophagosomes from host endoplasmic reticulum. Later, limits the expansion of these phagosomes that are no longer able to deliver viral components to lysosomes.</text>
</comment>
<comment type="function">
    <molecule>Non-structural protein 7</molecule>
    <text evidence="2">Forms a hexadecamer with nsp8 (8 subunits of each) that may participate in viral replication by acting as a primase. Alternatively, may synthesize substantially longer products than oligonucleotide primers.</text>
</comment>
<comment type="function">
    <molecule>Non-structural protein 8</molecule>
    <text evidence="2">Forms a hexadecamer with nsp7 (8 subunits of each) that may participate in viral replication by acting as a primase. Alternatively, may synthesize substantially longer products than oligonucleotide primers.</text>
</comment>
<comment type="function">
    <molecule>Viral protein genome-linked nsp9</molecule>
    <text evidence="3">Forms a primer, NSP9-pU, which is utilized by the polymerase for the initiation of RNA chains. Interacts with ribosome signal recognition particle RNA (SRP). Together with NSP8, suppress protein integration into the cell membrane, thereby disrupting host immune defenses.</text>
</comment>
<comment type="function">
    <molecule>Non-structural protein 10</molecule>
    <text evidence="2">Plays a pivotal role in viral transcription by stimulating both nsp14 3'-5' exoribonuclease and nsp16 2'-O-methyltransferase activities. Therefore plays an essential role in viral mRNAs cap methylation.</text>
</comment>
<comment type="function">
    <molecule>RNA-directed RNA polymerase nsp12</molecule>
    <text evidence="3">RNA-directed RNA polymerase that catalyzes the transcription of viral genomic and subgenomic RNAs. Acts in complex with nsp7 and nsp8 to transcribe both the minus and positive strands of genomic RNA. The kinase-like NiRAN domain of NSP12 attaches one or more nucleotides to the amino terminus of NSP9, forming a covalent RNA-protein intermediate that serves as transcription/replication primer. Subgenomic RNAs (sgRNAs) are formed by discontinuous transcription: The polymerase has the ability to pause at transcription-regulating sequences (TRS) and jump to the leader TRS, resulting in a major deletion. This creates a series of subgenomic RNAs that are replicated, transcribed and translated. In addition, Nsp12 is a subunit of the viral RNA capping enzyme that catalyzes the RNA guanylyltransferase reaction for genomic and sub-genomic RNAs. Subsequently, the NiRAN domain transfers RNA to GDP, and forms the core cap structure GpppA-RNA.</text>
</comment>
<comment type="function">
    <molecule>Helicase nsp13</molecule>
    <text evidence="2">Multi-functional protein with a zinc-binding domain in N-terminus displaying RNA and DNA duplex-unwinding activities with 5' to 3' polarity. Activity of helicase is dependent on magnesium.</text>
</comment>
<comment type="function">
    <molecule>Guanine-N7 methyltransferase nsp14</molecule>
    <text evidence="2">Plays a role in viral RNA synthesis through two distinct activities. The N7-guanine methyltransferase activity plays a role in the formation of the cap structure GpppA-RNA. The proofreading exoribonuclease reduces the sensitivity of the virus to RNA mutagens during replication. This activity acts on both ssRNA and dsRNA in a 3'-5' direction.</text>
</comment>
<comment type="function">
    <molecule>Uridylate-specific endoribonuclease nsp15</molecule>
    <text evidence="2">Plays a role in viral transcription/replication and prevents the simultaneous activation of host cell dsRNA sensors, such as MDA5/IFIH1, OAS, and PKR (By similarity). Acts by degrading the 5'-polyuridines generated during replication of the poly(A) region of viral genomic and subgenomic RNAs. Catalyzes a two-step reaction in which a 2'3'-cyclic phosphate (2'3'-cP) is first generated by 2'-O transesterification, which is then hydrolyzed to a 3'-phosphate (3'-P) (By similarity). If not degraded, poly(U) RNA would hybridize with poly(A) RNA tails and activate host dsRNA sensors (By similarity).</text>
</comment>
<comment type="function">
    <molecule>2'-O-methyltransferase nsp16</molecule>
    <text evidence="2">Methyltransferase that mediates mRNA cap 2'-O-ribose methylation to the 5'-cap structure of viral mRNAs. N7-methyl guanosine cap is a prerequisite for binding of nsp16. Therefore plays an essential role in viral mRNAs cap methylation which is essential to evade immune system.</text>
</comment>
<comment type="catalytic activity">
    <molecule>Helicase nsp13</molecule>
    <reaction>
        <text>ATP + H2O = ADP + phosphate + H(+)</text>
        <dbReference type="Rhea" id="RHEA:13065"/>
        <dbReference type="ChEBI" id="CHEBI:15377"/>
        <dbReference type="ChEBI" id="CHEBI:15378"/>
        <dbReference type="ChEBI" id="CHEBI:30616"/>
        <dbReference type="ChEBI" id="CHEBI:43474"/>
        <dbReference type="ChEBI" id="CHEBI:456216"/>
        <dbReference type="EC" id="3.6.4.12"/>
    </reaction>
</comment>
<comment type="catalytic activity">
    <molecule>Helicase nsp13</molecule>
    <reaction>
        <text>ATP + H2O = ADP + phosphate + H(+)</text>
        <dbReference type="Rhea" id="RHEA:13065"/>
        <dbReference type="ChEBI" id="CHEBI:15377"/>
        <dbReference type="ChEBI" id="CHEBI:15378"/>
        <dbReference type="ChEBI" id="CHEBI:30616"/>
        <dbReference type="ChEBI" id="CHEBI:43474"/>
        <dbReference type="ChEBI" id="CHEBI:456216"/>
        <dbReference type="EC" id="3.6.4.13"/>
    </reaction>
</comment>
<comment type="catalytic activity">
    <molecule>RNA-directed RNA polymerase nsp12</molecule>
    <reaction evidence="8">
        <text>RNA(n) + a ribonucleoside 5'-triphosphate = RNA(n+1) + diphosphate</text>
        <dbReference type="Rhea" id="RHEA:21248"/>
        <dbReference type="Rhea" id="RHEA-COMP:14527"/>
        <dbReference type="Rhea" id="RHEA-COMP:17342"/>
        <dbReference type="ChEBI" id="CHEBI:33019"/>
        <dbReference type="ChEBI" id="CHEBI:61557"/>
        <dbReference type="ChEBI" id="CHEBI:140395"/>
        <dbReference type="EC" id="2.7.7.48"/>
    </reaction>
</comment>
<comment type="catalytic activity">
    <molecule>Papain-like proteinase nsp3</molecule>
    <reaction>
        <text>Thiol-dependent hydrolysis of ester, thioester, amide, peptide and isopeptide bonds formed by the C-terminal Gly of ubiquitin (a 76-residue protein attached to proteins as an intracellular targeting signal).</text>
        <dbReference type="EC" id="3.4.19.12"/>
    </reaction>
</comment>
<comment type="catalytic activity">
    <molecule>2'-O-methyltransferase nsp16</molecule>
    <reaction evidence="2">
        <text>a 5'-end (N(7)-methyl 5'-triphosphoguanosine)-ribonucleoside in mRNA + S-adenosyl-L-methionine = a 5'-end (N(7)-methyl 5'-triphosphoguanosine)-(2'-O-methyl-ribonucleoside) in mRNA + S-adenosyl-L-homocysteine + H(+)</text>
        <dbReference type="Rhea" id="RHEA:67020"/>
        <dbReference type="Rhea" id="RHEA-COMP:17167"/>
        <dbReference type="Rhea" id="RHEA-COMP:17168"/>
        <dbReference type="ChEBI" id="CHEBI:15378"/>
        <dbReference type="ChEBI" id="CHEBI:57856"/>
        <dbReference type="ChEBI" id="CHEBI:59789"/>
        <dbReference type="ChEBI" id="CHEBI:156461"/>
        <dbReference type="ChEBI" id="CHEBI:167609"/>
        <dbReference type="EC" id="2.1.1.57"/>
    </reaction>
</comment>
<comment type="catalytic activity">
    <molecule>Uridylate-specific endoribonuclease nsp15</molecule>
    <reaction evidence="2">
        <text>uridylyl-uridylyl-ribonucleotide-RNA = a 3'-end uridylyl-2',3'-cyclophospho-uridine-RNA + a 5'-end dephospho-ribonucleoside-RNA</text>
        <dbReference type="Rhea" id="RHEA:67732"/>
        <dbReference type="Rhea" id="RHEA-COMP:13936"/>
        <dbReference type="Rhea" id="RHEA-COMP:17334"/>
        <dbReference type="Rhea" id="RHEA-COMP:17335"/>
        <dbReference type="ChEBI" id="CHEBI:138284"/>
        <dbReference type="ChEBI" id="CHEBI:173079"/>
        <dbReference type="ChEBI" id="CHEBI:173080"/>
    </reaction>
</comment>
<comment type="catalytic activity">
    <molecule>RNA-directed RNA polymerase nsp12</molecule>
    <reaction evidence="3">
        <text>a 5'-end diphospho-ribonucleoside in mRNA + GTP + H(+) = a 5'-end (5'-triphosphoguanosine)-ribonucleoside in mRNA + diphosphate</text>
        <dbReference type="Rhea" id="RHEA:67012"/>
        <dbReference type="Rhea" id="RHEA-COMP:17165"/>
        <dbReference type="Rhea" id="RHEA-COMP:17166"/>
        <dbReference type="ChEBI" id="CHEBI:15378"/>
        <dbReference type="ChEBI" id="CHEBI:33019"/>
        <dbReference type="ChEBI" id="CHEBI:37565"/>
        <dbReference type="ChEBI" id="CHEBI:167616"/>
        <dbReference type="ChEBI" id="CHEBI:167617"/>
        <dbReference type="EC" id="2.7.7.50"/>
    </reaction>
    <physiologicalReaction direction="left-to-right" evidence="3">
        <dbReference type="Rhea" id="RHEA:67013"/>
    </physiologicalReaction>
</comment>
<comment type="catalytic activity">
    <molecule>Guanine-N7 methyltransferase nsp14</molecule>
    <reaction evidence="2">
        <text>a 5'-end (5'-triphosphoguanosine)-ribonucleoside in mRNA + S-adenosyl-L-methionine = a 5'-end (N(7)-methyl 5'-triphosphoguanosine)-ribonucleoside in mRNA + S-adenosyl-L-homocysteine</text>
        <dbReference type="Rhea" id="RHEA:67008"/>
        <dbReference type="Rhea" id="RHEA-COMP:17166"/>
        <dbReference type="Rhea" id="RHEA-COMP:17167"/>
        <dbReference type="ChEBI" id="CHEBI:57856"/>
        <dbReference type="ChEBI" id="CHEBI:59789"/>
        <dbReference type="ChEBI" id="CHEBI:156461"/>
        <dbReference type="ChEBI" id="CHEBI:167617"/>
        <dbReference type="EC" id="2.1.1.56"/>
    </reaction>
    <physiologicalReaction direction="left-to-right" evidence="2">
        <dbReference type="Rhea" id="RHEA:67009"/>
    </physiologicalReaction>
</comment>
<comment type="cofactor">
    <molecule>Uridylate-specific endoribonuclease nsp15</molecule>
    <cofactor evidence="2">
        <name>Mn(2+)</name>
        <dbReference type="ChEBI" id="CHEBI:29035"/>
    </cofactor>
    <text evidence="2">Likely affects Nsp15 binding to RNA.</text>
</comment>
<comment type="cofactor">
    <molecule>RNA-directed RNA polymerase nsp12</molecule>
    <cofactor evidence="3">
        <name>Mg(2+)</name>
        <dbReference type="ChEBI" id="CHEBI:18420"/>
    </cofactor>
</comment>
<comment type="subunit">
    <molecule>Non-structural protein 2</molecule>
    <text evidence="2">Interacts with host PHB and PHB2.</text>
</comment>
<comment type="subunit">
    <molecule>Non-structural protein 4</molecule>
    <text evidence="2">Interacts with papain-like protease nsp3 and non-structural protein 6.</text>
</comment>
<comment type="subunit">
    <molecule>3C-like proteinase nsp5</molecule>
    <text evidence="2">Monomer. Homodimer. Only the homodimer shows catalytic activity.</text>
</comment>
<comment type="subunit">
    <molecule>Non-structural protein 7</molecule>
    <text evidence="3">Interacts with nsp8 and nsp12 to form the replication-transcription complex (RTC): nsp12, nsp7, two subunits of nsp8, and up to two subunits of nsp13.</text>
</comment>
<comment type="subunit">
    <molecule>Non-structural protein 8</molecule>
    <text evidence="3">Interacts with nsp7, nsp13 and nsp12 to form the replication-transcription complex (RTC): nsp12, nsp7, two subunits of nsp8, and up to two subunits of nsp13.</text>
</comment>
<comment type="subunit">
    <molecule>Viral protein genome-linked nsp9</molecule>
    <text evidence="3">Interacts with nsp12.</text>
</comment>
<comment type="subunit">
    <molecule>Non-structural protein 10</molecule>
    <text evidence="3">Interacts with proofreading exoribonuclease nsp14 and 2'-O-methyltransferase nsp16; these interactions enhance nsp14 and nsp16 enzymatic activities.</text>
</comment>
<comment type="subunit">
    <molecule>RNA-directed RNA polymerase nsp12</molecule>
    <text evidence="3">Interacts with nsp7 and nsp8 to form the replication-transcription complex (RTC): nsp12, nsp7, two subunits of nsp8, and up to two subunits of nsp13. Interacts with nsp9.</text>
</comment>
<comment type="subunit">
    <molecule>Helicase nsp13</molecule>
    <text evidence="3">Interacts with nsp8 to form the replication-transcription complex (RTC): nsp12, nsp7, two subunits of nsp8, and up to two subunits of nsp13.</text>
</comment>
<comment type="subcellular location">
    <molecule>Papain-like proteinase nsp3</molecule>
    <subcellularLocation>
        <location>Host membrane</location>
        <topology>Multi-pass membrane protein</topology>
    </subcellularLocation>
    <subcellularLocation>
        <location evidence="2">Host cytoplasm</location>
    </subcellularLocation>
</comment>
<comment type="subcellular location">
    <molecule>Non-structural protein 4</molecule>
    <subcellularLocation>
        <location>Host membrane</location>
        <topology>Multi-pass membrane protein</topology>
    </subcellularLocation>
    <subcellularLocation>
        <location>Host cytoplasm</location>
    </subcellularLocation>
    <text evidence="2">Localizes in virally-induced cytoplasmic double-membrane vesicles.</text>
</comment>
<comment type="subcellular location">
    <molecule>Non-structural protein 6</molecule>
    <subcellularLocation>
        <location evidence="37">Host membrane</location>
        <topology evidence="37">Multi-pass membrane protein</topology>
    </subcellularLocation>
</comment>
<comment type="subcellular location">
    <molecule>Non-structural protein 7</molecule>
    <subcellularLocation>
        <location evidence="1">Host cytoplasm</location>
        <location evidence="1">Host perinuclear region</location>
    </subcellularLocation>
    <text evidence="1">nsp7, nsp8, nsp9 and nsp10 are localized in cytoplasmic foci, largely perinuclear. Late in infection, they merge into confluent complexes (By similarity).</text>
</comment>
<comment type="subcellular location">
    <molecule>Non-structural protein 8</molecule>
    <subcellularLocation>
        <location evidence="1">Host cytoplasm</location>
        <location evidence="1">Host perinuclear region</location>
    </subcellularLocation>
    <text evidence="1">nsp7, nsp8, nsp9 and nsp10 are localized in cytoplasmic foci, largely perinuclear. Late in infection, they merge into confluent complexes (By similarity).</text>
</comment>
<comment type="subcellular location">
    <molecule>Viral protein genome-linked nsp9</molecule>
    <subcellularLocation>
        <location evidence="1">Host cytoplasm</location>
        <location evidence="1">Host perinuclear region</location>
    </subcellularLocation>
    <text evidence="1">nsp7, nsp8, nsp9 and nsp10 are localized in cytoplasmic foci, largely perinuclear. Late in infection, they merge into confluent complexes (By similarity).</text>
</comment>
<comment type="subcellular location">
    <molecule>Non-structural protein 10</molecule>
    <subcellularLocation>
        <location evidence="1">Host cytoplasm</location>
        <location evidence="1">Host perinuclear region</location>
    </subcellularLocation>
    <text evidence="1">nsp7, nsp8, nsp9 and nsp10 are localized in cytoplasmic foci, largely perinuclear. Late in infection, they merge into confluent complexes (By similarity).</text>
</comment>
<comment type="subcellular location">
    <molecule>Helicase nsp13</molecule>
    <subcellularLocation>
        <location evidence="37">Host endoplasmic reticulum-Golgi intermediate compartment</location>
    </subcellularLocation>
    <text evidence="1">The helicase interacts with the N protein in membranous complexes and colocalizes with sites of synthesis of new viral RNA.</text>
</comment>
<comment type="subcellular location">
    <molecule>Uridylate-specific endoribonuclease nsp15</molecule>
    <subcellularLocation>
        <location evidence="1">Host cytoplasm</location>
        <location evidence="1">Host perinuclear region</location>
    </subcellularLocation>
</comment>
<comment type="alternative products">
    <event type="ribosomal frameshifting"/>
    <isoform>
        <id>P0C6W1-1</id>
        <name>Replicase polyprotein 1ab</name>
        <name>pp1ab</name>
        <sequence type="displayed"/>
    </isoform>
    <isoform>
        <id>P0C6F7-1</id>
        <name>Replicase polyprotein 1a</name>
        <name>pp1a</name>
        <name>ORF1a polyprotein</name>
        <sequence type="external"/>
    </isoform>
</comment>
<comment type="domain">
    <text evidence="1">The hydrophobic domains (HD) could mediate the membrane association of the replication complex and thereby alter the architecture of the host cell membrane.</text>
</comment>
<comment type="PTM">
    <text evidence="1">Specific enzymatic cleavages in vivo by its own proteases yield mature proteins. 3CL-PRO and PL-PRO proteinases are autocatalytically processed (By similarity).</text>
</comment>
<comment type="miscellaneous">
    <molecule>Isoform Replicase polyprotein 1ab</molecule>
    <text>Produced by -1 ribosomal frameshifting at the 1a-1b genes boundary.</text>
</comment>
<comment type="similarity">
    <text evidence="37">Belongs to the coronaviruses polyprotein 1ab family.</text>
</comment>
<proteinExistence type="inferred from homology"/>
<sequence length="7126" mass="795781">MLSKAGVTTQGARGKYRAELYNEKRSDHVACTVPLCDTEDMASKLTPWFEDGETAFNQVSSILKEKGKILFVPMHMQRAMKFLPGPRVYLVERLTGGMLSKHFLVNQLAYKDHVGAAMMRTTLNVKPLGMFFPYDSSLETGEHTFLLRKNGLGGQLFRERPWDRKETPYVEILDDLEADPTGKYSQNLLKKLIGGDCIPVDQYMCGKNGKPIADYAKIVAKEGLTTLADIEVDVKSRMDSDRFIVLNKKLYRVVWNVTRRNVPYSKQTAFTVVSVIQCDDKESVPEHTFTIGSQILMVSPLKATNNKNFNLKQRLLHTFYGKEAVQQPGYIYHSAYVDCNACGRGTWCTGNAIQGFACDCGANYSANDVDLQSSGLVPKNALFLANCPCANNGACSHNAAQVYSILDGKACVEVGGKSFTLTFGGVVYAYMGCCDGTMYFVPRAKSCVSRIGDAIFTGCTGTWDKVVETANLFLEKAQHSLNFCQQFALTEVVLAILSGTTSTFEELRDLCHNASYEKVRDHLVNHGFVVTIGDYIRDAINIGANGVCNATINAPFIAFTGLGESFKKVAAIPWKICSNLKSALDYYCSNIMFRVFPYDIPCDVNDFVELLLDCGKLTVATSYFVLRYLDEKFDTVLGTVSNACQTALSSFLNACVAASRATAGFISDMFKLFKVLMHKLYVYTSCGYVAVAEHSSKIVQQVLDIMSKAMKLLHTNVSWAGTKLSAIIYEGREALLFNSGTYFCLSTKAKTLQDQMNLVLPGDYNKKTLGILDPVPNADTIDVTANSTVVDVVHGQLEPTNEHGPSMIVGNYVLVSDKLFVRTDDEEFYPLCINGKVVSTLFRLKGGMPSKKVTFGDVNTVEVTAYRSVSITYDIHPVLDALLSSSKLATFTVEKDLLVEDFVDVIKDEVLTLLTPLLRGYDIDGFDVEDFIDVPCYVYNQDGDCAWSSNMTFSINPVEDVEEVEEFIEDDYLSDELPIADDEEAWTRAVEEVMPLDDILVAEIELEEDLPLETALESVEAEVGESISDELCVVETAKAQEPSVESTDSTPSTSTVVSENDLSVKPMSRVAETGDVLEVETAVVGGPVSDVTASVVTNDIVSVEQAQQCGVSSLPIQDEASENQVHQVPDLQCTSETKVEIVQPRQDLRPRRLRKSKVDLSKYKHTVINNSVTLVLGDAIQIASLLPKCVLVNAANRHLKHGGGIAGAINKASGGDVQEESDEYISNSGPLHVGDSVLLKGYGLADAILRVVGPDARNNEDAALLKRCYKTFNKHTIVVTPLISSGIFSVDPKVSFEYLLANVTTTTYVVVNNEDIYNTLATPSKPDGLVYSFEGWRGTVRTAKNYGFTCFICTEYSANVKFLRTKGVDTTKKIQTVDGVSYYLYSARDALTDVIAAANGCPGICAMPFGYVTHGLDLAQSGNYVRQVKVPYVCLLASKEQIPIMNSDVAIQTPETAFINNVTSNGGYHSWHLVSGDLIVKDVCYKKLLHWSGQTICYADNKFYVVKNDVALPFSDLEACRAYLTSRAAQQVNIEVLVTIDGVNFRTVILNDATTFRKQLGATFYKGVDISDALPTVKMGGESLFVADNLSESEEVVLKEYYGTSDVTFLQRYYSLQPLVQQWKFVVHDGVKSLKLSNYNCYINATIMMIDMLHDIKFVVPALQNAYLRYKGGDPYDFLALIMAYGDCTFDNPDDEAKLLHTLLAKAELTVSAKMVWREWCTVCGIRDIEYTGMRACVYAGVNSMEELQSVFNETCVCGSVKHRQLVEHSTPWLLVSGLNEVKVSTSTDPVYRAFNVFQGVETSVGHYVHVRVKDGLFYKYDSGSLTKTSDMKCKMTSVWYPKVRYTADCNVVVYDLDGVTKVEVNPDLSNYYMKDGKYYTSKPTIKYSPATILPGSVYSNSCLVGVDGTPGSDTISKFFNDLLGFDETKPISKKLTYSLLPNEDGDVLLSEFNNYNPVYKKGVMLKGKPILWVNNGVCDSALNKPNRASLRQLYDVAPIVLDNKYTVLQDNTSQLIEPNVPVVEDVSITTRKLIEVKCKGLNKPFVKGNFSFVNDPNGVTVVDTLGLTELRALYVDINTRYIVLRDNNWSSLFKLHTVESGDLQIVANGGSVTRRARVLLGASSLFASFAKITVTATTAACKTAGRSFCKFVVNYGVLQNMFLFLKMLFFLPFNYLWPKKQPTVDVGVSGLRTAGVVTTNIVKQCGTAAYYMLLGKFKRVDWKATLRLFLLLCTTILLLSSIYHLVIFNQVLSSDVMLEDATGILAMYKEVRSYLGIRTLCDGLAVEYRNTSFDVVDFCSNRSVLCQWCLIGQDSLTRYSALQMLQTHITSYVLNIDWIWFALEFFLAYVLYTSSFNVLLLVVTAQYFFAYTSAFVNWRAYNYIVSGLFFLVTHIPLHGLVRVYNFLACLWFLRKFYSHVINGCKDTACLLCYKRNRLTRVEASTIVCGTKRTFYIAANGGTSYCCKHNWNCVECDTAGVGNTFICTEVANDLTTTLRRLIKPTDQSHYYVDSVVVKDAVVELHYNRDGSSCYERYPLCYFTNLEKLKFKEVCKTPTGIPEHNFLIYDTNDRGQENLARSACVYYSQVLCKPMLLVDVNLVTTVGDSREIAIKMLDSFINSFISLFSVSRDKLEKLINTARDCVRRGDDFQTVLKTFTDAARGHAGVESDVETTMVVDALQYAHKNDIQLTTECYNNYVPGYIKPDSINTLDLGCLIDLKAASVNQTSMRNANGACVWNSGDYMKLSDSFKRQIRIACRKCNIPFRLTTSKLRAADNILSVKFSATKIVGGAPSWLLRVRDLTVKGYCILTLFVFTVAVLSWFCLPSYSIATVNFNDDRILTYKVIENGIVRDIAPNDACFANKYGHFSKWFNENHGGVYRNSVDCPITIAVIAGVAGARVANVPATLAWVGRQIVLFVSRVFANTNVCFTPTNEIPYDTFSDSGCVLSSECTLFRDAEGNLNPFCYDPTVLPGASSYADMKPHVRYDMYDSDMYIKFPEVIFESTLRITKTLATQYCRFGSCEESAAGVCISTNGSWALYNQNYSTRPGIYCGDDYFDIVRRLAVSLFQPVTYFQLSTSLAMGLVLCVFLTAAFYYINKVKRALADYTQCAVVAVVAALLNSLCLCFIVANPLLVAPYTAMYYYATFYLTGEPAFIMHISWYVMFGTVVPIWMLASYTVGVMLRHLFWVLAYFSKKHVDVFTDGKLNCSFQDAASNIFVIGKDTYVALRNAITQDSFVRYLSLFNKYKYYSGAMDTASYREACAAHLCKALQTYSETGSDILYQPPNCSVTSSVLQSGLVKMSAPSGAVENCIVQVTCGSMTLNGLWLDNTVWCPRHIMCPADQLTDPNYDALLISKTNHSFIVQKHIGAQANLRVVAHSMVGVLLKLTVDVANPSTPAYTFSTVKPGASFSVLACYNGKPTGVFTVNLRHNSTIKGSFLCGSCGSVGYTENGGVLNFVYMHQMELSNGTHTGSSFDGVMYGAFEDKQTHQLQLTDKYCTINVVAWLYAAVLNGCKWFVKPTRVGIVTYNEWALSNQFTEFVGTQSIDMLAHRTGVSVEQMLAAIQSLHAGFQGKTILGQSTLEDEFTPDDVNMQVMGVVMQSGVKRISYGFMHWLMSTLVLAYVSVMQLTKFTMWTYLFETIPTQMTPLLFGFMACVMFTVKHKHTFLSLFLLPVALCLTYANIVYEPQTLVSSTLIAVANWLTPTSVYMRTTHLDFGLYISLSFVLAIIVRRLYRPSMSNLALALCSGVMWFYTYVIGDHSSPITYLMFITTLTSDYTITVFATVNLAKFISGLVFLYAPHLGFILPEVKLVLLIYLCLGYMCTMYFGVFSLLNLKLRVPLGVYDYSVSTQEFRFLTGNGLHAPRNSWEALILNFKLLGIGGTPCIKVATVQSKLTDLKCTSVVLLTVLQQLHLESNSKAWSYCVKLHNEILAAVDPTEAFERFVCLFATLMSFSANVDLDALANDLFENSSVLQATLTEFSHLATYAELETAQSSYQKALNSGDASPQVLKALQKAVNVAKNAYEKDKAVARKLERMAEQAMTSMYKQARAEDKKAKIVSAMQTMLFGMIKKLDNDVLNGVIANARNGCVPLSIVPLCASNKLRVVIPDISVWNKVVNWPSVSYAGSLWDVTVINNVDNEVVKPTDVVETNESLTWPLVIECSRASSSAVKLQNNEIHPKGLKTMVVTAGIDQVNCSSSAVAYYEPVQGHRMVMGLLSENAHLKWAKVEGKDGFINIELQPPCKFLIAGPKGPEIRYLYFVKNLNNLHRGQLLGHIAATVRLQAGANTEFASNSTVLTLVAFAVDPAKAYLDYVGSGGTPLSNYVKMLAPKTGTGVAISVKPEATADQETYGGASVCLYCRAHIEHPDVSGVCKYKTRFVQIPAHVRDPVGFLLKNVPCNVCQYWVGYGCNCDALRNNTVPQSKDTNFLNRVRGSSVNARLEPCSSGLTTDVVYRAFDICNFKARVAGIGKYYKTNTCRFVQVDDEGHKLDSYFIVKRHTMSNYELEKRCYDLLKDCDAVAIHDFFIFDVDKTKTPHIVRQSLTEYTMMDLVYALRHFDQNNCEVLKSILVKYGCCEQSYFDNKLWFDFVENPSVIGVYHKLGERIRQAMLNTVKMCDHMVKSGLVGVLTLDNQDLNGKWYDFGDFVITQPGAGVAIVDSYYSYLMPVLSMTNCLAAETHKDCDFNKPLIEWLLLEYDYTDYKIGLFNKYFKHWDQTYHPNCVNCGDDRCILHCANFNVLFSMVLPNTSFGPIVRKIFVDGVPFIVSCGYHYKELGLVMNMDVNIHRHRLALKELMMYAADPAMHIASASALWDLRTPCFSVAALTTGLTFQTVRPGNFNKDFYDFVVSRGFFKEGSSVTLKHFFFAQDGHAAITDYSYYAYNLPTMVDIKQMLFCMEVVDKYFDIYDGGCLNASEVIVNNLDKSAGHPFNKFGKARVYYESMSYQEQDELFAVTKRNVLPTITQMNLKYAISAKNRARTVAGVSILSTMTNRQYHQKMLKSMAATRGATCVIGTTKFYGGWDFMLKTLYKDVESPHLMGWDYPKCDRAMPNMCRILASLILARKHSTCCTNSDRFYRLANECAQVLSEYVLCGGGYYVKPGGTSSGDATTAYANSVFNILQATTANVSALMSANGNTIIDREIKDMQFDLYINVYRKVVPDPKFVDKYYAFLNKHFSMMILSDDGVVCYNSDYAAKGYVASIQNFKETLYYQNNVFMSEAKCWVETNLEKGPHEFCSQHTLYIKDGDDGYFLPYPDPSRILSAGCFVDDIVKTDGTVMMERYVSLAIDAYPLTKHDDTEYQNVFWVYLQYIEKLYKDLTGHMLDSYSVMLCGDDSAKFWEEGFYRDLYSSPTTLQAVGSCVVCHSQTSLRCGTCIRRPFLCCKCCYDHVIATTHKMVLSVSPYVCNAPGCDVSDVTKLYLGGMSYYCNDHRPVCSFPLCANGLVFGLYKNMCTGSSSIMEFNRLATCDWSDSGDYTLANTTTEPLKLFAAETLRATEEASKQSYAIATIKEIVGERELILVWEVGKSKPPLNRNYVFTGYHLTKNSKVQLGEYVFERIDYSDAVSYKSSTTYKLAVGDIFVLTSHSVATLSAPTIVNQERYLKITGIYPTITVPEEFANHVVNFQKAGFSKYVTVQGPPGTGKSHFAIGLAIYYPTARIVYTACSHAAVDALCAKAFKYLNIAKCSRIIPAKARVECYDRFKVNDTNAQYLFSTVNALPEISVDILVVDEVSMCTNYDLSIINSRVKAKHIVYVGDPAQLPAPRTLLTRGTLEPENFNSVTRLMCNLGPDIFLSVCYRCPKEIVNTVSALVYNNKLSAKKDASGQCFKILFKGSVTHDASSAINRPQLNFVKTFIAANPNWSKAVFISPYNSQNAVARSMLGLTTQTVDSSQGSEYPYVIFCQTADTAHANNLNRFNVAVTRAQKGILCVMTSQVLFDSLEFAELSLNNYKLQSQIVTGLFKDCSREDVGLPPAYAPTYLSVDAKYKTTDELCVNLNITPNVTYSRVISRMGFKLDATIPGYPKLFITRDEAIRQVRSWIGFDVEGAHASRNACGTNVPLQLGFSTGVNFVVQPVGVVDTEWGSMLTTISARPPPGEQFKHLVPLMNKGATWPIVRRRIVQMLSDTLDKLSDYCTFVCWAHGFELTSASYFCKIGKEQRCCMCSRRASTFSSPLQSYACWSHSSGYDYVYNPFFVDVQQWGYVGNLATNHDRYCGIHAGAHVASSDAIMTRCLAIYDCFIERVDWDVTYPYISHEQKLNSCCRTVERNVVRSAVLSGKFDKIYDIGNPKGIPIISEPVEWHFYDAQPLSNKVKKLFYTDDVAKQFEDGLCLFWNCNVSKYPSNAVVCRFDTRVHSEFNLPGCNGGSLYVNKHAFHTPAYDINAFRDLKPLPFFYYSTTPCEVHGSGNMLEDIDYVPLKSAVCITACNLGGAVCRKHAAEYRDYMEAYNIVSAAGFRLWVYKTFDIYNLWSTFVKVQGLENIAFNVIKQGHFTGVDGELPVAVVNDKIFTKNGTDDVCIFKNETALPTNVAFELYAKRAVRSHPDLNLLRNLEVDVCYNFVLWDYDRNNIYGTTTIGVCKYTDIDVNPNLNMCFDIRDKGSLERFMSMPNGVLISDRKIKNYPCIIGPKHAYFNGAILRNIDAKQPITFYLYKKVNNEFVSFSDTFYTCGRTVNDFTALTPMEEDFLVLDSDVFIKKYSLEDYAFEHVVYGDFSHTTLGGLHLLIGLYKKMRDGHILMEEMLKDRATVHNYFITDSNTASYKAVCSVIDLRLDDFVNIIKEMDLDVVSKVVKVPIDLTMIEFMLWCKDGKVQTFYPRLQATNDWKPGLTMPSLFKVQQMNLEPCLLANYKQSIPMPNGVHMNVAKYMQLCQYLNTCTLAVPANMRVIHFGAGCEKGVAPGTSVLRQWLPLDAVLIDNDLNEFVSDADITIFGDCVTVHVGQQVDLLISDMYDPCTKAVGEVNQTKALFFVYLCNFIKNNLALGGSVAIKITEHSWSADLYKIMGRFAYWTVFCTNANASSSEGFLIGINFLGELKEEIDGNVMHANYIFWRNSTPMNLSTYSLFDLSRFPLKLKGTPVLQLKESQINELVISLLSQGKLLIRDNDTLNVSTDVLVNFRKRL</sequence>
<keyword id="KW-1072">Activation of host autophagy by virus</keyword>
<keyword id="KW-0067">ATP-binding</keyword>
<keyword id="KW-1132">Decay of host mRNAs by virus</keyword>
<keyword id="KW-1015">Disulfide bond</keyword>
<keyword id="KW-0255">Endonuclease</keyword>
<keyword id="KW-1262">Eukaryotic host gene expression shutoff by virus</keyword>
<keyword id="KW-1193">Eukaryotic host translation shutoff by virus</keyword>
<keyword id="KW-0269">Exonuclease</keyword>
<keyword id="KW-0347">Helicase</keyword>
<keyword id="KW-1035">Host cytoplasm</keyword>
<keyword id="KW-1190">Host gene expression shutoff by virus</keyword>
<keyword id="KW-1043">Host membrane</keyword>
<keyword id="KW-1192">Host mRNA suppression by virus</keyword>
<keyword id="KW-0945">Host-virus interaction</keyword>
<keyword id="KW-0378">Hydrolase</keyword>
<keyword id="KW-1090">Inhibition of host innate immune response by virus</keyword>
<keyword id="KW-1114">Inhibition of host interferon signaling pathway by virus</keyword>
<keyword id="KW-1095">Inhibition of host ISG15 by virus</keyword>
<keyword id="KW-1100">Inhibition of host NF-kappa-B by virus</keyword>
<keyword id="KW-0922">Interferon antiviral system evasion</keyword>
<keyword id="KW-0456">Lyase</keyword>
<keyword id="KW-0464">Manganese</keyword>
<keyword id="KW-0472">Membrane</keyword>
<keyword id="KW-0479">Metal-binding</keyword>
<keyword id="KW-0489">Methyltransferase</keyword>
<keyword id="KW-1127">Modulation of host ubiquitin pathway by viral deubiquitinase</keyword>
<keyword id="KW-1130">Modulation of host ubiquitin pathway by virus</keyword>
<keyword id="KW-0540">Nuclease</keyword>
<keyword id="KW-0547">Nucleotide-binding</keyword>
<keyword id="KW-0548">Nucleotidyltransferase</keyword>
<keyword id="KW-0645">Protease</keyword>
<keyword id="KW-0677">Repeat</keyword>
<keyword id="KW-0688">Ribosomal frameshifting</keyword>
<keyword id="KW-0694">RNA-binding</keyword>
<keyword id="KW-0696">RNA-directed RNA polymerase</keyword>
<keyword id="KW-0788">Thiol protease</keyword>
<keyword id="KW-0808">Transferase</keyword>
<keyword id="KW-0812">Transmembrane</keyword>
<keyword id="KW-1133">Transmembrane helix</keyword>
<keyword id="KW-0833">Ubl conjugation pathway</keyword>
<keyword id="KW-0899">Viral immunoevasion</keyword>
<keyword id="KW-0693">Viral RNA replication</keyword>
<keyword id="KW-0862">Zinc</keyword>
<keyword id="KW-0863">Zinc-finger</keyword>
<dbReference type="EC" id="3.4.19.12"/>
<dbReference type="EC" id="3.4.22.-"/>
<dbReference type="EC" id="2.7.7.48"/>
<dbReference type="EC" id="2.7.7.50"/>
<dbReference type="EC" id="3.6.4.12"/>
<dbReference type="EC" id="3.6.4.13"/>
<dbReference type="EC" id="2.1.1.56"/>
<dbReference type="EC" id="3.1.13.-"/>
<dbReference type="EC" id="4.6.1.-"/>
<dbReference type="EC" id="2.1.1.57"/>
<dbReference type="EMBL" id="DQ648794">
    <property type="protein sequence ID" value="ABG47051.1"/>
    <property type="molecule type" value="Genomic_RNA"/>
</dbReference>
<dbReference type="SMR" id="P0C6W1"/>
<dbReference type="Proteomes" id="UP000007449">
    <property type="component" value="Genome"/>
</dbReference>
<dbReference type="GO" id="GO:0044172">
    <property type="term" value="C:host cell endoplasmic reticulum-Golgi intermediate compartment"/>
    <property type="evidence" value="ECO:0007669"/>
    <property type="project" value="UniProtKB-SubCell"/>
</dbReference>
<dbReference type="GO" id="GO:0033644">
    <property type="term" value="C:host cell membrane"/>
    <property type="evidence" value="ECO:0007669"/>
    <property type="project" value="UniProtKB-SubCell"/>
</dbReference>
<dbReference type="GO" id="GO:0044220">
    <property type="term" value="C:host cell perinuclear region of cytoplasm"/>
    <property type="evidence" value="ECO:0007669"/>
    <property type="project" value="UniProtKB-SubCell"/>
</dbReference>
<dbReference type="GO" id="GO:0016020">
    <property type="term" value="C:membrane"/>
    <property type="evidence" value="ECO:0007669"/>
    <property type="project" value="UniProtKB-KW"/>
</dbReference>
<dbReference type="GO" id="GO:0000175">
    <property type="term" value="F:3'-5'-RNA exonuclease activity"/>
    <property type="evidence" value="ECO:0007669"/>
    <property type="project" value="InterPro"/>
</dbReference>
<dbReference type="GO" id="GO:0043139">
    <property type="term" value="F:5'-3' DNA helicase activity"/>
    <property type="evidence" value="ECO:0007669"/>
    <property type="project" value="TreeGrafter"/>
</dbReference>
<dbReference type="GO" id="GO:0005524">
    <property type="term" value="F:ATP binding"/>
    <property type="evidence" value="ECO:0007669"/>
    <property type="project" value="UniProtKB-KW"/>
</dbReference>
<dbReference type="GO" id="GO:0016887">
    <property type="term" value="F:ATP hydrolysis activity"/>
    <property type="evidence" value="ECO:0007669"/>
    <property type="project" value="RHEA"/>
</dbReference>
<dbReference type="GO" id="GO:0004843">
    <property type="term" value="F:cysteine-type deubiquitinase activity"/>
    <property type="evidence" value="ECO:0007669"/>
    <property type="project" value="UniProtKB-EC"/>
</dbReference>
<dbReference type="GO" id="GO:0004197">
    <property type="term" value="F:cysteine-type endopeptidase activity"/>
    <property type="evidence" value="ECO:0007669"/>
    <property type="project" value="InterPro"/>
</dbReference>
<dbReference type="GO" id="GO:0004519">
    <property type="term" value="F:endonuclease activity"/>
    <property type="evidence" value="ECO:0007669"/>
    <property type="project" value="UniProtKB-KW"/>
</dbReference>
<dbReference type="GO" id="GO:0002151">
    <property type="term" value="F:G-quadruplex RNA binding"/>
    <property type="evidence" value="ECO:0007669"/>
    <property type="project" value="InterPro"/>
</dbReference>
<dbReference type="GO" id="GO:0016829">
    <property type="term" value="F:lyase activity"/>
    <property type="evidence" value="ECO:0007669"/>
    <property type="project" value="UniProtKB-KW"/>
</dbReference>
<dbReference type="GO" id="GO:0004483">
    <property type="term" value="F:mRNA (nucleoside-2'-O-)-methyltransferase activity"/>
    <property type="evidence" value="ECO:0007669"/>
    <property type="project" value="InterPro"/>
</dbReference>
<dbReference type="GO" id="GO:0004482">
    <property type="term" value="F:mRNA 5'-cap (guanine-N7-)-methyltransferase activity"/>
    <property type="evidence" value="ECO:0007669"/>
    <property type="project" value="InterPro"/>
</dbReference>
<dbReference type="GO" id="GO:0008242">
    <property type="term" value="F:omega peptidase activity"/>
    <property type="evidence" value="ECO:0007669"/>
    <property type="project" value="InterPro"/>
</dbReference>
<dbReference type="GO" id="GO:0003724">
    <property type="term" value="F:RNA helicase activity"/>
    <property type="evidence" value="ECO:0007669"/>
    <property type="project" value="UniProtKB-EC"/>
</dbReference>
<dbReference type="GO" id="GO:0003968">
    <property type="term" value="F:RNA-directed RNA polymerase activity"/>
    <property type="evidence" value="ECO:0007669"/>
    <property type="project" value="UniProtKB-KW"/>
</dbReference>
<dbReference type="GO" id="GO:0003727">
    <property type="term" value="F:single-stranded RNA binding"/>
    <property type="evidence" value="ECO:0007669"/>
    <property type="project" value="InterPro"/>
</dbReference>
<dbReference type="GO" id="GO:0008270">
    <property type="term" value="F:zinc ion binding"/>
    <property type="evidence" value="ECO:0007669"/>
    <property type="project" value="UniProtKB-KW"/>
</dbReference>
<dbReference type="GO" id="GO:0006351">
    <property type="term" value="P:DNA-templated transcription"/>
    <property type="evidence" value="ECO:0007669"/>
    <property type="project" value="InterPro"/>
</dbReference>
<dbReference type="GO" id="GO:0006508">
    <property type="term" value="P:proteolysis"/>
    <property type="evidence" value="ECO:0007669"/>
    <property type="project" value="UniProtKB-KW"/>
</dbReference>
<dbReference type="GO" id="GO:0010506">
    <property type="term" value="P:regulation of autophagy"/>
    <property type="evidence" value="ECO:0007669"/>
    <property type="project" value="InterPro"/>
</dbReference>
<dbReference type="GO" id="GO:0039520">
    <property type="term" value="P:symbiont-mediated activation of host autophagy"/>
    <property type="evidence" value="ECO:0007669"/>
    <property type="project" value="UniProtKB-KW"/>
</dbReference>
<dbReference type="GO" id="GO:0039595">
    <property type="term" value="P:symbiont-mediated degradation of host mRNA"/>
    <property type="evidence" value="ECO:0007669"/>
    <property type="project" value="UniProtKB-KW"/>
</dbReference>
<dbReference type="GO" id="GO:0039648">
    <property type="term" value="P:symbiont-mediated perturbation of host ubiquitin-like protein modification"/>
    <property type="evidence" value="ECO:0007669"/>
    <property type="project" value="UniProtKB-KW"/>
</dbReference>
<dbReference type="GO" id="GO:0039657">
    <property type="term" value="P:symbiont-mediated suppression of host gene expression"/>
    <property type="evidence" value="ECO:0007669"/>
    <property type="project" value="UniProtKB-KW"/>
</dbReference>
<dbReference type="GO" id="GO:0039579">
    <property type="term" value="P:symbiont-mediated suppression of host ISG15-protein conjugation"/>
    <property type="evidence" value="ECO:0007669"/>
    <property type="project" value="UniProtKB-KW"/>
</dbReference>
<dbReference type="GO" id="GO:0085034">
    <property type="term" value="P:symbiont-mediated suppression of host NF-kappaB cascade"/>
    <property type="evidence" value="ECO:0007669"/>
    <property type="project" value="UniProtKB-KW"/>
</dbReference>
<dbReference type="GO" id="GO:0039502">
    <property type="term" value="P:symbiont-mediated suppression of host type I interferon-mediated signaling pathway"/>
    <property type="evidence" value="ECO:0007669"/>
    <property type="project" value="UniProtKB-KW"/>
</dbReference>
<dbReference type="GO" id="GO:0019082">
    <property type="term" value="P:viral protein processing"/>
    <property type="evidence" value="ECO:0007669"/>
    <property type="project" value="InterPro"/>
</dbReference>
<dbReference type="GO" id="GO:0039694">
    <property type="term" value="P:viral RNA genome replication"/>
    <property type="evidence" value="ECO:0007669"/>
    <property type="project" value="InterPro"/>
</dbReference>
<dbReference type="GO" id="GO:0075523">
    <property type="term" value="P:viral translational frameshifting"/>
    <property type="evidence" value="ECO:0007669"/>
    <property type="project" value="UniProtKB-KW"/>
</dbReference>
<dbReference type="CDD" id="cd21409">
    <property type="entry name" value="1B_cv_Nsp13-like"/>
    <property type="match status" value="1"/>
</dbReference>
<dbReference type="CDD" id="cd21901">
    <property type="entry name" value="alpha_betaCoV_Nsp10"/>
    <property type="match status" value="1"/>
</dbReference>
<dbReference type="CDD" id="cd21560">
    <property type="entry name" value="betaCoV-Nsp6"/>
    <property type="match status" value="1"/>
</dbReference>
<dbReference type="CDD" id="cd21722">
    <property type="entry name" value="betaCoV_Nsp13-helicase"/>
    <property type="match status" value="1"/>
</dbReference>
<dbReference type="CDD" id="cd21659">
    <property type="entry name" value="betaCoV_Nsp14"/>
    <property type="match status" value="1"/>
</dbReference>
<dbReference type="CDD" id="cd21666">
    <property type="entry name" value="betaCoV_Nsp5_Mpro"/>
    <property type="match status" value="1"/>
</dbReference>
<dbReference type="CDD" id="cd21827">
    <property type="entry name" value="betaCoV_Nsp7"/>
    <property type="match status" value="1"/>
</dbReference>
<dbReference type="CDD" id="cd21831">
    <property type="entry name" value="betaCoV_Nsp8"/>
    <property type="match status" value="1"/>
</dbReference>
<dbReference type="CDD" id="cd21898">
    <property type="entry name" value="betaCoV_Nsp9"/>
    <property type="match status" value="1"/>
</dbReference>
<dbReference type="CDD" id="cd21732">
    <property type="entry name" value="betaCoV_PLPro"/>
    <property type="match status" value="1"/>
</dbReference>
<dbReference type="CDD" id="cd23528">
    <property type="entry name" value="capping_2-OMTase_betaCoV_Nsp16"/>
    <property type="match status" value="1"/>
</dbReference>
<dbReference type="CDD" id="cd21473">
    <property type="entry name" value="cv_Nsp4_TM"/>
    <property type="match status" value="1"/>
</dbReference>
<dbReference type="CDD" id="cd21167">
    <property type="entry name" value="M_alpha_beta_cv_Nsp15-like"/>
    <property type="match status" value="1"/>
</dbReference>
<dbReference type="CDD" id="cd21563">
    <property type="entry name" value="Macro_cv_SUD-M_Nsp3-like"/>
    <property type="match status" value="1"/>
</dbReference>
<dbReference type="CDD" id="cd21557">
    <property type="entry name" value="Macro_X_Nsp3-like"/>
    <property type="match status" value="1"/>
</dbReference>
<dbReference type="CDD" id="cd21878">
    <property type="entry name" value="MERS-CoV-like_Nsp1"/>
    <property type="match status" value="1"/>
</dbReference>
<dbReference type="CDD" id="cd21815">
    <property type="entry name" value="MERS-CoV-like_Nsp3_betaSM"/>
    <property type="match status" value="1"/>
</dbReference>
<dbReference type="CDD" id="cd21823">
    <property type="entry name" value="MERS-CoV-like_Nsp3_NAB"/>
    <property type="match status" value="1"/>
</dbReference>
<dbReference type="CDD" id="cd21592">
    <property type="entry name" value="MERS-CoV-like_RdRp"/>
    <property type="match status" value="1"/>
</dbReference>
<dbReference type="CDD" id="cd21161">
    <property type="entry name" value="NendoU_cv_Nsp15-like"/>
    <property type="match status" value="1"/>
</dbReference>
<dbReference type="CDD" id="cd21171">
    <property type="entry name" value="NTD_alpha_betaCoV_Nsp15-like"/>
    <property type="match status" value="1"/>
</dbReference>
<dbReference type="CDD" id="cd21689">
    <property type="entry name" value="stalk_CoV_Nsp13-like"/>
    <property type="match status" value="1"/>
</dbReference>
<dbReference type="CDD" id="cd21523">
    <property type="entry name" value="SUD_C_MERS-CoV_Nsp3"/>
    <property type="match status" value="1"/>
</dbReference>
<dbReference type="CDD" id="cd21716">
    <property type="entry name" value="TM_Y_MERS-CoV-like_Nsp3_C"/>
    <property type="match status" value="1"/>
</dbReference>
<dbReference type="CDD" id="cd21467">
    <property type="entry name" value="Ubl1_cv_Nsp3_N-like"/>
    <property type="match status" value="1"/>
</dbReference>
<dbReference type="CDD" id="cd21401">
    <property type="entry name" value="ZBD_cv_Nsp13-like"/>
    <property type="match status" value="1"/>
</dbReference>
<dbReference type="FunFam" id="3.40.50.150:FF:000162">
    <property type="entry name" value="Orf1ab polyprotein"/>
    <property type="match status" value="1"/>
</dbReference>
<dbReference type="FunFam" id="3.40.50.300:FF:001139">
    <property type="entry name" value="Orf1ab polyprotein"/>
    <property type="match status" value="1"/>
</dbReference>
<dbReference type="FunFam" id="1.10.150.420:FF:000001">
    <property type="entry name" value="Replicase polyprotein"/>
    <property type="match status" value="1"/>
</dbReference>
<dbReference type="FunFam" id="2.40.10.10:FF:000045">
    <property type="entry name" value="Replicase polyprotein 1a"/>
    <property type="match status" value="1"/>
</dbReference>
<dbReference type="Gene3D" id="1.10.8.1190">
    <property type="match status" value="1"/>
</dbReference>
<dbReference type="Gene3D" id="2.60.120.1680">
    <property type="match status" value="1"/>
</dbReference>
<dbReference type="Gene3D" id="3.10.20.350">
    <property type="match status" value="1"/>
</dbReference>
<dbReference type="Gene3D" id="3.10.20.540">
    <property type="match status" value="1"/>
</dbReference>
<dbReference type="Gene3D" id="3.40.50.11580">
    <property type="match status" value="1"/>
</dbReference>
<dbReference type="Gene3D" id="6.10.140.2090">
    <property type="match status" value="1"/>
</dbReference>
<dbReference type="Gene3D" id="1.10.150.420">
    <property type="entry name" value="Coronavirus nonstructural protein 4 C-terminus"/>
    <property type="match status" value="1"/>
</dbReference>
<dbReference type="Gene3D" id="3.40.220.10">
    <property type="entry name" value="Leucine Aminopeptidase, subunit E, domain 1"/>
    <property type="match status" value="1"/>
</dbReference>
<dbReference type="Gene3D" id="1.10.1840.10">
    <property type="entry name" value="main proteinase (3clpro) structure, domain 3"/>
    <property type="match status" value="1"/>
</dbReference>
<dbReference type="Gene3D" id="3.30.160.820">
    <property type="entry name" value="Nsp15 N-terminal domain-like"/>
    <property type="match status" value="1"/>
</dbReference>
<dbReference type="Gene3D" id="3.40.220.20">
    <property type="entry name" value="Nsp3, SUD-M subdomain"/>
    <property type="match status" value="1"/>
</dbReference>
<dbReference type="Gene3D" id="1.10.8.370">
    <property type="entry name" value="nsp7 replicase"/>
    <property type="match status" value="1"/>
</dbReference>
<dbReference type="Gene3D" id="3.30.70.3540">
    <property type="entry name" value="Nsp8 replicase, head domain"/>
    <property type="match status" value="1"/>
</dbReference>
<dbReference type="Gene3D" id="3.40.50.300">
    <property type="entry name" value="P-loop containing nucleotide triphosphate hydrolases"/>
    <property type="match status" value="2"/>
</dbReference>
<dbReference type="Gene3D" id="2.40.10.250">
    <property type="entry name" value="Replicase NSP9"/>
    <property type="match status" value="1"/>
</dbReference>
<dbReference type="Gene3D" id="3.40.50.11020">
    <property type="entry name" value="Replicase polyprotein, nucleic acid-binding domain"/>
    <property type="match status" value="1"/>
</dbReference>
<dbReference type="Gene3D" id="2.40.10.10">
    <property type="entry name" value="Trypsin-like serine proteases"/>
    <property type="match status" value="2"/>
</dbReference>
<dbReference type="Gene3D" id="3.40.50.150">
    <property type="entry name" value="Vaccinia Virus protein VP39"/>
    <property type="match status" value="1"/>
</dbReference>
<dbReference type="InterPro" id="IPR027351">
    <property type="entry name" value="(+)RNA_virus_helicase_core_dom"/>
</dbReference>
<dbReference type="InterPro" id="IPR046443">
    <property type="entry name" value="a/bCoV_NSP1_glob"/>
</dbReference>
<dbReference type="InterPro" id="IPR046440">
    <property type="entry name" value="AV_NSP11N_COV_NSP15M"/>
</dbReference>
<dbReference type="InterPro" id="IPR046442">
    <property type="entry name" value="bCoV_NSP1_C"/>
</dbReference>
<dbReference type="InterPro" id="IPR050534">
    <property type="entry name" value="Coronavir_polyprotein_1ab"/>
</dbReference>
<dbReference type="InterPro" id="IPR043608">
    <property type="entry name" value="CoV_NSP15_M"/>
</dbReference>
<dbReference type="InterPro" id="IPR043606">
    <property type="entry name" value="CoV_NSP15_N"/>
</dbReference>
<dbReference type="InterPro" id="IPR043613">
    <property type="entry name" value="CoV_NSP2_C"/>
</dbReference>
<dbReference type="InterPro" id="IPR047573">
    <property type="entry name" value="CoV_NSP2_M"/>
</dbReference>
<dbReference type="InterPro" id="IPR049894">
    <property type="entry name" value="COV_NSP3_3ECTO"/>
</dbReference>
<dbReference type="InterPro" id="IPR043611">
    <property type="entry name" value="CoV_NSP3_C"/>
</dbReference>
<dbReference type="InterPro" id="IPR047566">
    <property type="entry name" value="CoV_NSP3_Y"/>
</dbReference>
<dbReference type="InterPro" id="IPR032505">
    <property type="entry name" value="CoV_NSP4_C"/>
</dbReference>
<dbReference type="InterPro" id="IPR043612">
    <property type="entry name" value="CoV_NSP4_N"/>
</dbReference>
<dbReference type="InterPro" id="IPR043502">
    <property type="entry name" value="DNA/RNA_pol_sf"/>
</dbReference>
<dbReference type="InterPro" id="IPR041679">
    <property type="entry name" value="DNA2/NAM7-like_C"/>
</dbReference>
<dbReference type="InterPro" id="IPR022733">
    <property type="entry name" value="DPUP_SUD_C_bCoV"/>
</dbReference>
<dbReference type="InterPro" id="IPR037227">
    <property type="entry name" value="EndoU-like"/>
</dbReference>
<dbReference type="InterPro" id="IPR002589">
    <property type="entry name" value="Macro_dom"/>
</dbReference>
<dbReference type="InterPro" id="IPR043472">
    <property type="entry name" value="Macro_dom-like"/>
</dbReference>
<dbReference type="InterPro" id="IPR044371">
    <property type="entry name" value="Macro_X_NSP3-like"/>
</dbReference>
<dbReference type="InterPro" id="IPR046435">
    <property type="entry name" value="N7_MTase_CoV"/>
</dbReference>
<dbReference type="InterPro" id="IPR043609">
    <property type="entry name" value="NendoU_nidovirus"/>
</dbReference>
<dbReference type="InterPro" id="IPR044863">
    <property type="entry name" value="NIRAN"/>
</dbReference>
<dbReference type="InterPro" id="IPR046438">
    <property type="entry name" value="NIV_2_O_MTASE"/>
</dbReference>
<dbReference type="InterPro" id="IPR046436">
    <property type="entry name" value="NIV_EXON"/>
</dbReference>
<dbReference type="InterPro" id="IPR036333">
    <property type="entry name" value="NSP10_sf_CoV"/>
</dbReference>
<dbReference type="InterPro" id="IPR047570">
    <property type="entry name" value="NSP12_IF_CoV"/>
</dbReference>
<dbReference type="InterPro" id="IPR044343">
    <property type="entry name" value="NSP13_1B_dom_CoV"/>
</dbReference>
<dbReference type="InterPro" id="IPR048673">
    <property type="entry name" value="NSP13_stalk_CoV"/>
</dbReference>
<dbReference type="InterPro" id="IPR048672">
    <property type="entry name" value="NSP13_ZBD_CoV"/>
</dbReference>
<dbReference type="InterPro" id="IPR027352">
    <property type="entry name" value="NSP13_ZBD_CoV-like"/>
</dbReference>
<dbReference type="InterPro" id="IPR044315">
    <property type="entry name" value="NSP14_betaCoV"/>
</dbReference>
<dbReference type="InterPro" id="IPR009466">
    <property type="entry name" value="NSP14_CoV"/>
</dbReference>
<dbReference type="InterPro" id="IPR044330">
    <property type="entry name" value="NSP15_alpha_betaCoV_N"/>
</dbReference>
<dbReference type="InterPro" id="IPR044322">
    <property type="entry name" value="NSP15_M_alpha_beta_CoV"/>
</dbReference>
<dbReference type="InterPro" id="IPR043174">
    <property type="entry name" value="NSP15_middle_sf"/>
</dbReference>
<dbReference type="InterPro" id="IPR042515">
    <property type="entry name" value="NSP15_N_CoV"/>
</dbReference>
<dbReference type="InterPro" id="IPR044401">
    <property type="entry name" value="NSP15_NendoU_CoV"/>
</dbReference>
<dbReference type="InterPro" id="IPR009461">
    <property type="entry name" value="NSP16_CoV-like"/>
</dbReference>
<dbReference type="InterPro" id="IPR021590">
    <property type="entry name" value="NSP1_glob_bCoV"/>
</dbReference>
<dbReference type="InterPro" id="IPR043615">
    <property type="entry name" value="NSP2_N_CoV"/>
</dbReference>
<dbReference type="InterPro" id="IPR024375">
    <property type="entry name" value="NSP3_bCoV"/>
</dbReference>
<dbReference type="InterPro" id="IPR047567">
    <property type="entry name" value="NSP3_G2M_bCoV"/>
</dbReference>
<dbReference type="InterPro" id="IPR032592">
    <property type="entry name" value="NSP3_NAB_bCoV"/>
</dbReference>
<dbReference type="InterPro" id="IPR042570">
    <property type="entry name" value="NSP3_NAB_bCoV_sf"/>
</dbReference>
<dbReference type="InterPro" id="IPR038400">
    <property type="entry name" value="NSP3_SUD-M_sf_bCoV"/>
</dbReference>
<dbReference type="InterPro" id="IPR044382">
    <property type="entry name" value="NSP3_SUD_C_MERS-CoV"/>
</dbReference>
<dbReference type="InterPro" id="IPR044357">
    <property type="entry name" value="NSP3_Ubl1_dom_CoV"/>
</dbReference>
<dbReference type="InterPro" id="IPR044353">
    <property type="entry name" value="Nsp3_Ubl2_dom_CoV"/>
</dbReference>
<dbReference type="InterPro" id="IPR038083">
    <property type="entry name" value="NSP3A-like"/>
</dbReference>
<dbReference type="InterPro" id="IPR038123">
    <property type="entry name" value="NSP4_C_sf_CoV"/>
</dbReference>
<dbReference type="InterPro" id="IPR044367">
    <property type="entry name" value="NSP6_betaCoV"/>
</dbReference>
<dbReference type="InterPro" id="IPR043610">
    <property type="entry name" value="NSP6_CoV"/>
</dbReference>
<dbReference type="InterPro" id="IPR014828">
    <property type="entry name" value="NSP7_CoV"/>
</dbReference>
<dbReference type="InterPro" id="IPR037204">
    <property type="entry name" value="NSP7_sf_CoV"/>
</dbReference>
<dbReference type="InterPro" id="IPR014829">
    <property type="entry name" value="NSP8_CoV"/>
</dbReference>
<dbReference type="InterPro" id="IPR037230">
    <property type="entry name" value="NSP8_sf_CoV"/>
</dbReference>
<dbReference type="InterPro" id="IPR014822">
    <property type="entry name" value="NSP9_CoV"/>
</dbReference>
<dbReference type="InterPro" id="IPR036499">
    <property type="entry name" value="NSP9_sf_CoV"/>
</dbReference>
<dbReference type="InterPro" id="IPR027417">
    <property type="entry name" value="P-loop_NTPase"/>
</dbReference>
<dbReference type="InterPro" id="IPR013016">
    <property type="entry name" value="Peptidase_C16_CoV"/>
</dbReference>
<dbReference type="InterPro" id="IPR008740">
    <property type="entry name" value="Peptidase_C30_CoV"/>
</dbReference>
<dbReference type="InterPro" id="IPR043477">
    <property type="entry name" value="Peptidase_C30_dom3_CoV"/>
</dbReference>
<dbReference type="InterPro" id="IPR009003">
    <property type="entry name" value="Peptidase_S1_PA"/>
</dbReference>
<dbReference type="InterPro" id="IPR043504">
    <property type="entry name" value="Peptidase_S1_PA_chymotrypsin"/>
</dbReference>
<dbReference type="InterPro" id="IPR043177">
    <property type="entry name" value="PLpro_N_sf_CoV"/>
</dbReference>
<dbReference type="InterPro" id="IPR043503">
    <property type="entry name" value="PLpro_palm_finger_dom_CoV"/>
</dbReference>
<dbReference type="InterPro" id="IPR043178">
    <property type="entry name" value="PLpro_thumb_sf_CoV"/>
</dbReference>
<dbReference type="InterPro" id="IPR046441">
    <property type="entry name" value="RdRp_CoV"/>
</dbReference>
<dbReference type="InterPro" id="IPR044350">
    <property type="entry name" value="RdRp_MERS-CoV-like"/>
</dbReference>
<dbReference type="InterPro" id="IPR009469">
    <property type="entry name" value="RdRp_N_CoV"/>
</dbReference>
<dbReference type="InterPro" id="IPR001205">
    <property type="entry name" value="RNA-dir_pol_C"/>
</dbReference>
<dbReference type="InterPro" id="IPR007094">
    <property type="entry name" value="RNA-dir_pol_PSvirus"/>
</dbReference>
<dbReference type="InterPro" id="IPR018995">
    <property type="entry name" value="RNA_synth_NSP10_CoV"/>
</dbReference>
<dbReference type="InterPro" id="IPR029063">
    <property type="entry name" value="SAM-dependent_MTases_sf"/>
</dbReference>
<dbReference type="PANTHER" id="PTHR43788:SF8">
    <property type="entry name" value="DNA-BINDING PROTEIN SMUBP-2"/>
    <property type="match status" value="1"/>
</dbReference>
<dbReference type="PANTHER" id="PTHR43788">
    <property type="entry name" value="DNA2/NAM7 HELICASE FAMILY MEMBER"/>
    <property type="match status" value="1"/>
</dbReference>
<dbReference type="Pfam" id="PF13087">
    <property type="entry name" value="AAA_12"/>
    <property type="match status" value="1"/>
</dbReference>
<dbReference type="Pfam" id="PF13604">
    <property type="entry name" value="AAA_30"/>
    <property type="match status" value="1"/>
</dbReference>
<dbReference type="Pfam" id="PF16251">
    <property type="entry name" value="bCoV_NAB"/>
    <property type="match status" value="1"/>
</dbReference>
<dbReference type="Pfam" id="PF11501">
    <property type="entry name" value="bCoV_NSP1"/>
    <property type="match status" value="1"/>
</dbReference>
<dbReference type="Pfam" id="PF11633">
    <property type="entry name" value="bCoV_SUD_M"/>
    <property type="match status" value="1"/>
</dbReference>
<dbReference type="Pfam" id="PF06471">
    <property type="entry name" value="CoV_ExoN"/>
    <property type="match status" value="1"/>
</dbReference>
<dbReference type="Pfam" id="PF06460">
    <property type="entry name" value="CoV_Methyltr_2"/>
    <property type="match status" value="1"/>
</dbReference>
<dbReference type="Pfam" id="PF09401">
    <property type="entry name" value="CoV_NSP10"/>
    <property type="match status" value="1"/>
</dbReference>
<dbReference type="Pfam" id="PF20631">
    <property type="entry name" value="CoV_NSP13_1B"/>
    <property type="match status" value="1"/>
</dbReference>
<dbReference type="Pfam" id="PF20633">
    <property type="entry name" value="CoV_NSP13_stalk"/>
    <property type="match status" value="1"/>
</dbReference>
<dbReference type="Pfam" id="PF20632">
    <property type="entry name" value="CoV_NSP13_ZBD"/>
    <property type="match status" value="1"/>
</dbReference>
<dbReference type="Pfam" id="PF19215">
    <property type="entry name" value="CoV_NSP15_C"/>
    <property type="match status" value="1"/>
</dbReference>
<dbReference type="Pfam" id="PF19216">
    <property type="entry name" value="CoV_NSP15_M"/>
    <property type="match status" value="1"/>
</dbReference>
<dbReference type="Pfam" id="PF19219">
    <property type="entry name" value="CoV_NSP15_N"/>
    <property type="match status" value="1"/>
</dbReference>
<dbReference type="Pfam" id="PF19212">
    <property type="entry name" value="CoV_NSP2_C"/>
    <property type="match status" value="1"/>
</dbReference>
<dbReference type="Pfam" id="PF19211">
    <property type="entry name" value="CoV_NSP2_N"/>
    <property type="match status" value="1"/>
</dbReference>
<dbReference type="Pfam" id="PF19218">
    <property type="entry name" value="CoV_NSP3_C"/>
    <property type="match status" value="1"/>
</dbReference>
<dbReference type="Pfam" id="PF16348">
    <property type="entry name" value="CoV_NSP4_C"/>
    <property type="match status" value="1"/>
</dbReference>
<dbReference type="Pfam" id="PF19217">
    <property type="entry name" value="CoV_NSP4_N"/>
    <property type="match status" value="1"/>
</dbReference>
<dbReference type="Pfam" id="PF19213">
    <property type="entry name" value="CoV_NSP6"/>
    <property type="match status" value="1"/>
</dbReference>
<dbReference type="Pfam" id="PF08716">
    <property type="entry name" value="CoV_NSP7"/>
    <property type="match status" value="1"/>
</dbReference>
<dbReference type="Pfam" id="PF08717">
    <property type="entry name" value="CoV_NSP8"/>
    <property type="match status" value="1"/>
</dbReference>
<dbReference type="Pfam" id="PF08710">
    <property type="entry name" value="CoV_NSP9"/>
    <property type="match status" value="1"/>
</dbReference>
<dbReference type="Pfam" id="PF08715">
    <property type="entry name" value="CoV_peptidase"/>
    <property type="match status" value="1"/>
</dbReference>
<dbReference type="Pfam" id="PF06478">
    <property type="entry name" value="CoV_RPol_N"/>
    <property type="match status" value="1"/>
</dbReference>
<dbReference type="Pfam" id="PF01661">
    <property type="entry name" value="Macro"/>
    <property type="match status" value="1"/>
</dbReference>
<dbReference type="Pfam" id="PF05409">
    <property type="entry name" value="Peptidase_C30"/>
    <property type="match status" value="1"/>
</dbReference>
<dbReference type="Pfam" id="PF00680">
    <property type="entry name" value="RdRP_1"/>
    <property type="match status" value="1"/>
</dbReference>
<dbReference type="SMART" id="SM00506">
    <property type="entry name" value="A1pp"/>
    <property type="match status" value="1"/>
</dbReference>
<dbReference type="SUPFAM" id="SSF144246">
    <property type="entry name" value="Coronavirus NSP10-like"/>
    <property type="match status" value="1"/>
</dbReference>
<dbReference type="SUPFAM" id="SSF140367">
    <property type="entry name" value="Coronavirus NSP7-like"/>
    <property type="match status" value="1"/>
</dbReference>
<dbReference type="SUPFAM" id="SSF143076">
    <property type="entry name" value="Coronavirus NSP8-like"/>
    <property type="match status" value="1"/>
</dbReference>
<dbReference type="SUPFAM" id="SSF56672">
    <property type="entry name" value="DNA/RNA polymerases"/>
    <property type="match status" value="1"/>
</dbReference>
<dbReference type="SUPFAM" id="SSF142877">
    <property type="entry name" value="EndoU-like"/>
    <property type="match status" value="1"/>
</dbReference>
<dbReference type="SUPFAM" id="SSF52949">
    <property type="entry name" value="Macro domain-like"/>
    <property type="match status" value="1"/>
</dbReference>
<dbReference type="SUPFAM" id="SSF159936">
    <property type="entry name" value="NSP3A-like"/>
    <property type="match status" value="1"/>
</dbReference>
<dbReference type="SUPFAM" id="SSF52540">
    <property type="entry name" value="P-loop containing nucleoside triphosphate hydrolases"/>
    <property type="match status" value="1"/>
</dbReference>
<dbReference type="SUPFAM" id="SSF101816">
    <property type="entry name" value="Replicase NSP9"/>
    <property type="match status" value="1"/>
</dbReference>
<dbReference type="SUPFAM" id="SSF53335">
    <property type="entry name" value="S-adenosyl-L-methionine-dependent methyltransferases"/>
    <property type="match status" value="1"/>
</dbReference>
<dbReference type="SUPFAM" id="SSF50494">
    <property type="entry name" value="Trypsin-like serine proteases"/>
    <property type="match status" value="1"/>
</dbReference>
<dbReference type="PROSITE" id="PS51961">
    <property type="entry name" value="AV_NSP11N_COV_NSP15M"/>
    <property type="match status" value="1"/>
</dbReference>
<dbReference type="PROSITE" id="PS51963">
    <property type="entry name" value="BCOV_NSP1_C"/>
    <property type="match status" value="1"/>
</dbReference>
<dbReference type="PROSITE" id="PS51942">
    <property type="entry name" value="BCOV_NSP3C_C"/>
    <property type="match status" value="1"/>
</dbReference>
<dbReference type="PROSITE" id="PS51941">
    <property type="entry name" value="BCOV_NSP3C_M"/>
    <property type="match status" value="1"/>
</dbReference>
<dbReference type="PROSITE" id="PS51994">
    <property type="entry name" value="BCOV_NSP3E_G2M"/>
    <property type="match status" value="1"/>
</dbReference>
<dbReference type="PROSITE" id="PS51945">
    <property type="entry name" value="BCOV_NSP3E_NAB"/>
    <property type="match status" value="1"/>
</dbReference>
<dbReference type="PROSITE" id="PS51993">
    <property type="entry name" value="COV_3ECTO"/>
    <property type="match status" value="1"/>
</dbReference>
<dbReference type="PROSITE" id="PS51952">
    <property type="entry name" value="COV_EXON_MTASE_COACT"/>
    <property type="match status" value="1"/>
</dbReference>
<dbReference type="PROSITE" id="PS51954">
    <property type="entry name" value="COV_N7_MTASE"/>
    <property type="match status" value="1"/>
</dbReference>
<dbReference type="PROSITE" id="PS51962">
    <property type="entry name" value="COV_NSP1"/>
    <property type="match status" value="1"/>
</dbReference>
<dbReference type="PROSITE" id="PS52000">
    <property type="entry name" value="COV_NSP12_IF"/>
    <property type="match status" value="1"/>
</dbReference>
<dbReference type="PROSITE" id="PS51948">
    <property type="entry name" value="COV_NSP12_RDRP"/>
    <property type="match status" value="1"/>
</dbReference>
<dbReference type="PROSITE" id="PS51960">
    <property type="entry name" value="COV_NSP15_NTD"/>
    <property type="match status" value="1"/>
</dbReference>
<dbReference type="PROSITE" id="PS51991">
    <property type="entry name" value="COV_NSP2_C"/>
    <property type="match status" value="1"/>
</dbReference>
<dbReference type="PROSITE" id="PS51990">
    <property type="entry name" value="COV_NSP2_M"/>
    <property type="match status" value="1"/>
</dbReference>
<dbReference type="PROSITE" id="PS51989">
    <property type="entry name" value="COV_NSP2_N"/>
    <property type="match status" value="1"/>
</dbReference>
<dbReference type="PROSITE" id="PS51992">
    <property type="entry name" value="COV_NSP3_Y"/>
    <property type="match status" value="1"/>
</dbReference>
<dbReference type="PROSITE" id="PS51943">
    <property type="entry name" value="COV_NSP3A_UBL"/>
    <property type="match status" value="1"/>
</dbReference>
<dbReference type="PROSITE" id="PS51944">
    <property type="entry name" value="COV_NSP3D_UBL"/>
    <property type="match status" value="1"/>
</dbReference>
<dbReference type="PROSITE" id="PS51946">
    <property type="entry name" value="COV_NSP4C"/>
    <property type="match status" value="1"/>
</dbReference>
<dbReference type="PROSITE" id="PS51949">
    <property type="entry name" value="COV_NSP7"/>
    <property type="match status" value="1"/>
</dbReference>
<dbReference type="PROSITE" id="PS51950">
    <property type="entry name" value="COV_NSP8"/>
    <property type="match status" value="1"/>
</dbReference>
<dbReference type="PROSITE" id="PS51951">
    <property type="entry name" value="COV_NSP9_SSRNA_BD"/>
    <property type="match status" value="1"/>
</dbReference>
<dbReference type="PROSITE" id="PS51653">
    <property type="entry name" value="CV_ZBD"/>
    <property type="match status" value="1"/>
</dbReference>
<dbReference type="PROSITE" id="PS51442">
    <property type="entry name" value="M_PRO"/>
    <property type="match status" value="1"/>
</dbReference>
<dbReference type="PROSITE" id="PS51154">
    <property type="entry name" value="MACRO"/>
    <property type="match status" value="1"/>
</dbReference>
<dbReference type="PROSITE" id="PS51958">
    <property type="entry name" value="NENDOU"/>
    <property type="match status" value="1"/>
</dbReference>
<dbReference type="PROSITE" id="PS51947">
    <property type="entry name" value="NIRAN"/>
    <property type="match status" value="1"/>
</dbReference>
<dbReference type="PROSITE" id="PS51955">
    <property type="entry name" value="NIV_2_O_MTASE"/>
    <property type="match status" value="1"/>
</dbReference>
<dbReference type="PROSITE" id="PS51953">
    <property type="entry name" value="NIV_EXON"/>
    <property type="match status" value="1"/>
</dbReference>
<dbReference type="PROSITE" id="PS51124">
    <property type="entry name" value="PEPTIDASE_C16"/>
    <property type="match status" value="1"/>
</dbReference>
<dbReference type="PROSITE" id="PS51657">
    <property type="entry name" value="PSRV_HELICASE"/>
    <property type="match status" value="1"/>
</dbReference>
<dbReference type="PROSITE" id="PS50507">
    <property type="entry name" value="RDRP_SSRNA_POS"/>
    <property type="match status" value="1"/>
</dbReference>
<evidence type="ECO:0000250" key="1"/>
<evidence type="ECO:0000250" key="2">
    <source>
        <dbReference type="UniProtKB" id="P0C6X7"/>
    </source>
</evidence>
<evidence type="ECO:0000250" key="3">
    <source>
        <dbReference type="UniProtKB" id="P0DTD1"/>
    </source>
</evidence>
<evidence type="ECO:0000255" key="4"/>
<evidence type="ECO:0000255" key="5">
    <source>
        <dbReference type="PROSITE-ProRule" id="PRU00214"/>
    </source>
</evidence>
<evidence type="ECO:0000255" key="6">
    <source>
        <dbReference type="PROSITE-ProRule" id="PRU00444"/>
    </source>
</evidence>
<evidence type="ECO:0000255" key="7">
    <source>
        <dbReference type="PROSITE-ProRule" id="PRU00490"/>
    </source>
</evidence>
<evidence type="ECO:0000255" key="8">
    <source>
        <dbReference type="PROSITE-ProRule" id="PRU00539"/>
    </source>
</evidence>
<evidence type="ECO:0000255" key="9">
    <source>
        <dbReference type="PROSITE-ProRule" id="PRU00772"/>
    </source>
</evidence>
<evidence type="ECO:0000255" key="10">
    <source>
        <dbReference type="PROSITE-ProRule" id="PRU00986"/>
    </source>
</evidence>
<evidence type="ECO:0000255" key="11">
    <source>
        <dbReference type="PROSITE-ProRule" id="PRU01289"/>
    </source>
</evidence>
<evidence type="ECO:0000255" key="12">
    <source>
        <dbReference type="PROSITE-ProRule" id="PRU01290"/>
    </source>
</evidence>
<evidence type="ECO:0000255" key="13">
    <source>
        <dbReference type="PROSITE-ProRule" id="PRU01291"/>
    </source>
</evidence>
<evidence type="ECO:0000255" key="14">
    <source>
        <dbReference type="PROSITE-ProRule" id="PRU01292"/>
    </source>
</evidence>
<evidence type="ECO:0000255" key="15">
    <source>
        <dbReference type="PROSITE-ProRule" id="PRU01293"/>
    </source>
</evidence>
<evidence type="ECO:0000255" key="16">
    <source>
        <dbReference type="PROSITE-ProRule" id="PRU01294"/>
    </source>
</evidence>
<evidence type="ECO:0000255" key="17">
    <source>
        <dbReference type="PROSITE-ProRule" id="PRU01295"/>
    </source>
</evidence>
<evidence type="ECO:0000255" key="18">
    <source>
        <dbReference type="PROSITE-ProRule" id="PRU01296"/>
    </source>
</evidence>
<evidence type="ECO:0000255" key="19">
    <source>
        <dbReference type="PROSITE-ProRule" id="PRU01297"/>
    </source>
</evidence>
<evidence type="ECO:0000255" key="20">
    <source>
        <dbReference type="PROSITE-ProRule" id="PRU01298"/>
    </source>
</evidence>
<evidence type="ECO:0000255" key="21">
    <source>
        <dbReference type="PROSITE-ProRule" id="PRU01299"/>
    </source>
</evidence>
<evidence type="ECO:0000255" key="22">
    <source>
        <dbReference type="PROSITE-ProRule" id="PRU01300"/>
    </source>
</evidence>
<evidence type="ECO:0000255" key="23">
    <source>
        <dbReference type="PROSITE-ProRule" id="PRU01303"/>
    </source>
</evidence>
<evidence type="ECO:0000255" key="24">
    <source>
        <dbReference type="PROSITE-ProRule" id="PRU01305"/>
    </source>
</evidence>
<evidence type="ECO:0000255" key="25">
    <source>
        <dbReference type="PROSITE-ProRule" id="PRU01306"/>
    </source>
</evidence>
<evidence type="ECO:0000255" key="26">
    <source>
        <dbReference type="PROSITE-ProRule" id="PRU01307"/>
    </source>
</evidence>
<evidence type="ECO:0000255" key="27">
    <source>
        <dbReference type="PROSITE-ProRule" id="PRU01308"/>
    </source>
</evidence>
<evidence type="ECO:0000255" key="28">
    <source>
        <dbReference type="PROSITE-ProRule" id="PRU01333"/>
    </source>
</evidence>
<evidence type="ECO:0000255" key="29">
    <source>
        <dbReference type="PROSITE-ProRule" id="PRU01334"/>
    </source>
</evidence>
<evidence type="ECO:0000255" key="30">
    <source>
        <dbReference type="PROSITE-ProRule" id="PRU01335"/>
    </source>
</evidence>
<evidence type="ECO:0000255" key="31">
    <source>
        <dbReference type="PROSITE-ProRule" id="PRU01336"/>
    </source>
</evidence>
<evidence type="ECO:0000255" key="32">
    <source>
        <dbReference type="PROSITE-ProRule" id="PRU01337"/>
    </source>
</evidence>
<evidence type="ECO:0000255" key="33">
    <source>
        <dbReference type="PROSITE-ProRule" id="PRU01338"/>
    </source>
</evidence>
<evidence type="ECO:0000255" key="34">
    <source>
        <dbReference type="PROSITE-ProRule" id="PRU01344"/>
    </source>
</evidence>
<evidence type="ECO:0000256" key="35">
    <source>
        <dbReference type="SAM" id="MobiDB-lite"/>
    </source>
</evidence>
<evidence type="ECO:0000269" key="36">
    <source>
    </source>
</evidence>
<evidence type="ECO:0000305" key="37"/>
<gene>
    <name type="primary">rep</name>
    <name type="ORF">1a-1b</name>
</gene>